<name>DL_DROME</name>
<sequence length="833" mass="88841">MHWIKCLLTAFICFTVIVQVHSSGSFELRLKYFSNDHGRDNEGRCCSGESDGATGKCLGSCKTRFRVCLKHYQATIDTTSQCTYGDVITPILGENSVNLTDAQRFQNKGFTNPIQFPFSFSWPGTFSLIVEAWHDTNNSGNARTNKLLIQRLLVQQVLEVSSEWKTNKSESQYTSLEYDFRVTCDLNYYGSGCAKFCRPRDDSFGHSTCSETGEIICLTGWQGDYCHIPKCAKGCEHGHCDKPNQCVCQLGWKGALCNECVLEPNCIHGTCNKPWTCICNEGWGGLYCNQDLNYCTNHRPCKNGGTCFNTGEGLYTCKCAPGYSGDDCENEIYSCDADVNPCQNGGTCIDEPHTKTGYKCHCANGWSGKMCEEKVLTCSDKPCHQGICRNVRPGLGSKGQGYQCECPIGYSGPNCDLQLDNCSPNPCINGGSCQPSGKCICPAGFSGTRCETNIDDCLGHQCENGGTCIDMVNQYRCQCVPGFHGTHCSSKVDLCLIRPCANGGTCLNLNNDYQCTCRAGFTGKDCSVDIDECSSGPCHNGGTCMNRVNSFECVCANGFRGKQCDEESYDSVTFDAHQYGATTQARADGLTNAQVVLIAVFSVAMPLVAVIAACVVFCMKRKRKRAQEKDDAEARKQNEQNAVATMHHNGSGVGVALASASLGGKTGSNSGLTFDGGNPNIIKNTWDKSVNNICASAAAAAAAAAAADECLMYGGYVASVADNNNANSDFCVAPLQRAKSQKQLNTDPTLMHRGSPAGSSAKGASGGGPGAAEGKRISVLGEGSYCSQRWPSLAAAGVAGACSSQLMAAASVAGSGAGTAQQQRSVVCGTPHM</sequence>
<comment type="function">
    <text evidence="7">Acts as a ligand for Notch (N) receptor. Essential for proper differentiation of ectoderm. Delta is required for the correct separation of neural and epidermal cell lineages. Fringe (fng) acts in the Golgi to determine the type of O-linked fucose on the EGF modules in N, altering the ability of N to bind with Delta. O-fut1 also has a role in modulating the interaction.</text>
</comment>
<comment type="subunit">
    <text evidence="7 9">Interacts with Notch (N) via the EGF repeats and the N EGF repeats.</text>
</comment>
<comment type="interaction">
    <interactant intactId="EBI-115346">
        <id>P10041</id>
    </interactant>
    <interactant intactId="EBI-103438">
        <id>P07207</id>
        <label>N</label>
    </interactant>
    <organismsDiffer>false</organismsDiffer>
    <experiments>2</experiments>
</comment>
<comment type="subcellular location">
    <subcellularLocation>
        <location>Membrane</location>
        <topology>Single-pass type I membrane protein</topology>
    </subcellularLocation>
</comment>
<comment type="tissue specificity">
    <text evidence="10">Detected in all areas with neurogenic abilities, for example the neurogenic ectoderm and the primordia of the sense organs. Later expression is restricted to those cells that have adopted a neural fate.</text>
</comment>
<comment type="developmental stage">
    <text evidence="10">Expressed both maternally and zygotically. Expression is highest early in embryonic development (stage 5) and reduces to a low level during larval stages.</text>
</comment>
<comment type="PTM">
    <text evidence="8 9">Ubiquitinated by Mib, leading to its endocytosis and subsequent degradation.</text>
</comment>
<comment type="miscellaneous">
    <text>Separation of neuroblasts from the ectoderm into the inner part of embryo is one of the first steps of CNS development in insects, this process is under control of the neurogenic genes.</text>
</comment>
<comment type="miscellaneous">
    <text>Notch and Serrate may interact at the protein level, it is conceivable that the Serrate and Delta proteins may compete for binding with the Notch protein.</text>
</comment>
<comment type="sequence caution" evidence="14">
    <conflict type="erroneous initiation">
        <sequence resource="EMBL-CDS" id="AAL28817"/>
    </conflict>
    <text>Truncated N-terminus.</text>
</comment>
<feature type="signal peptide" evidence="3">
    <location>
        <begin position="1"/>
        <end position="18"/>
    </location>
</feature>
<feature type="chain" id="PRO_0000007505" description="Neurogenic locus protein delta">
    <location>
        <begin position="19"/>
        <end position="833"/>
    </location>
</feature>
<feature type="topological domain" description="Extracellular" evidence="3">
    <location>
        <begin position="19"/>
        <end position="594"/>
    </location>
</feature>
<feature type="transmembrane region" description="Helical" evidence="3">
    <location>
        <begin position="595"/>
        <end position="617"/>
    </location>
</feature>
<feature type="topological domain" description="Cytoplasmic" evidence="3">
    <location>
        <begin position="618"/>
        <end position="833"/>
    </location>
</feature>
<feature type="domain" description="DSL" evidence="5">
    <location>
        <begin position="182"/>
        <end position="226"/>
    </location>
</feature>
<feature type="domain" description="EGF-like 1" evidence="4">
    <location>
        <begin position="227"/>
        <end position="258"/>
    </location>
</feature>
<feature type="domain" description="EGF-like 2" evidence="4">
    <location>
        <begin position="256"/>
        <end position="289"/>
    </location>
</feature>
<feature type="domain" description="EGF-like 3" evidence="4">
    <location>
        <begin position="291"/>
        <end position="329"/>
    </location>
</feature>
<feature type="domain" description="EGF-like 4" evidence="4">
    <location>
        <begin position="331"/>
        <end position="372"/>
    </location>
</feature>
<feature type="domain" description="EGF-like 5" evidence="4">
    <location>
        <begin position="374"/>
        <end position="416"/>
    </location>
</feature>
<feature type="domain" description="EGF-like 6" evidence="4">
    <location>
        <begin position="418"/>
        <end position="451"/>
    </location>
</feature>
<feature type="domain" description="EGF-like 7; calcium-binding" evidence="4">
    <location>
        <begin position="453"/>
        <end position="489"/>
    </location>
</feature>
<feature type="domain" description="EGF-like 8" evidence="4">
    <location>
        <begin position="491"/>
        <end position="527"/>
    </location>
</feature>
<feature type="domain" description="EGF-like 9; calcium-binding" evidence="4">
    <location>
        <begin position="529"/>
        <end position="565"/>
    </location>
</feature>
<feature type="region of interest" description="Disordered" evidence="6">
    <location>
        <begin position="743"/>
        <end position="773"/>
    </location>
</feature>
<feature type="compositionally biased region" description="Low complexity" evidence="6">
    <location>
        <begin position="754"/>
        <end position="763"/>
    </location>
</feature>
<feature type="modified residue" description="Phosphothreonine" evidence="11">
    <location>
        <position position="666"/>
    </location>
</feature>
<feature type="glycosylation site" description="N-linked (GlcNAc...) asparagine" evidence="3">
    <location>
        <position position="98"/>
    </location>
</feature>
<feature type="glycosylation site" description="N-linked (GlcNAc...) asparagine" evidence="3">
    <location>
        <position position="137"/>
    </location>
</feature>
<feature type="glycosylation site" description="N-linked (GlcNAc...) asparagine" evidence="3">
    <location>
        <position position="167"/>
    </location>
</feature>
<feature type="disulfide bond" evidence="2">
    <location>
        <begin position="46"/>
        <end position="61"/>
    </location>
</feature>
<feature type="disulfide bond" evidence="2">
    <location>
        <begin position="68"/>
        <end position="82"/>
    </location>
</feature>
<feature type="disulfide bond" evidence="2 5">
    <location>
        <begin position="184"/>
        <end position="193"/>
    </location>
</feature>
<feature type="disulfide bond" evidence="2 5">
    <location>
        <begin position="197"/>
        <end position="209"/>
    </location>
</feature>
<feature type="disulfide bond" evidence="2 5">
    <location>
        <begin position="217"/>
        <end position="226"/>
    </location>
</feature>
<feature type="disulfide bond" evidence="2 4">
    <location>
        <begin position="231"/>
        <end position="240"/>
    </location>
</feature>
<feature type="disulfide bond" evidence="2 4">
    <location>
        <begin position="235"/>
        <end position="246"/>
    </location>
</feature>
<feature type="disulfide bond" evidence="2 4">
    <location>
        <begin position="248"/>
        <end position="257"/>
    </location>
</feature>
<feature type="disulfide bond" evidence="2">
    <location>
        <begin position="260"/>
        <end position="271"/>
    </location>
</feature>
<feature type="disulfide bond" evidence="2">
    <location>
        <begin position="266"/>
        <end position="277"/>
    </location>
</feature>
<feature type="disulfide bond" evidence="2 4">
    <location>
        <begin position="279"/>
        <end position="288"/>
    </location>
</feature>
<feature type="disulfide bond" evidence="1">
    <location>
        <begin position="295"/>
        <end position="307"/>
    </location>
</feature>
<feature type="disulfide bond" evidence="1">
    <location>
        <begin position="301"/>
        <end position="317"/>
    </location>
</feature>
<feature type="disulfide bond" evidence="1">
    <location>
        <begin position="319"/>
        <end position="328"/>
    </location>
</feature>
<feature type="disulfide bond" evidence="1">
    <location>
        <begin position="335"/>
        <end position="348"/>
    </location>
</feature>
<feature type="disulfide bond" evidence="1">
    <location>
        <begin position="342"/>
        <end position="360"/>
    </location>
</feature>
<feature type="disulfide bond" evidence="1">
    <location>
        <begin position="362"/>
        <end position="371"/>
    </location>
</feature>
<feature type="disulfide bond" evidence="1">
    <location>
        <begin position="378"/>
        <end position="388"/>
    </location>
</feature>
<feature type="disulfide bond" evidence="1">
    <location>
        <begin position="383"/>
        <end position="404"/>
    </location>
</feature>
<feature type="disulfide bond" evidence="1">
    <location>
        <begin position="406"/>
        <end position="415"/>
    </location>
</feature>
<feature type="disulfide bond" evidence="1">
    <location>
        <begin position="422"/>
        <end position="433"/>
    </location>
</feature>
<feature type="disulfide bond" evidence="1">
    <location>
        <begin position="427"/>
        <end position="439"/>
    </location>
</feature>
<feature type="disulfide bond" evidence="1">
    <location>
        <begin position="441"/>
        <end position="450"/>
    </location>
</feature>
<feature type="disulfide bond" evidence="1">
    <location>
        <begin position="457"/>
        <end position="468"/>
    </location>
</feature>
<feature type="disulfide bond" evidence="1">
    <location>
        <begin position="462"/>
        <end position="477"/>
    </location>
</feature>
<feature type="disulfide bond" evidence="1">
    <location>
        <begin position="479"/>
        <end position="488"/>
    </location>
</feature>
<feature type="disulfide bond" evidence="1">
    <location>
        <begin position="495"/>
        <end position="506"/>
    </location>
</feature>
<feature type="disulfide bond" evidence="1">
    <location>
        <begin position="500"/>
        <end position="515"/>
    </location>
</feature>
<feature type="disulfide bond" evidence="1">
    <location>
        <begin position="517"/>
        <end position="526"/>
    </location>
</feature>
<feature type="disulfide bond" evidence="1">
    <location>
        <begin position="533"/>
        <end position="544"/>
    </location>
</feature>
<feature type="disulfide bond" evidence="1">
    <location>
        <begin position="538"/>
        <end position="553"/>
    </location>
</feature>
<feature type="disulfide bond" evidence="1">
    <location>
        <begin position="555"/>
        <end position="564"/>
    </location>
</feature>
<feature type="sequence variant" description="In strain: sonoma_017.">
    <original>K</original>
    <variation>R</variation>
    <location>
        <position position="398"/>
    </location>
</feature>
<feature type="sequence variant" description="In strain: sonoma_009, sonoma_051, sonoma_053 and sonoma_054.">
    <original>A</original>
    <variation>T</variation>
    <location>
        <position position="443"/>
    </location>
</feature>
<feature type="sequence variant" description="In strain: sonoma_010, sonoma_013, sonoma_019 and sonoma_117.">
    <original>Q</original>
    <variation>K</variation>
    <location>
        <position position="461"/>
    </location>
</feature>
<feature type="sequence variant" description="In strain: NapaValley5, NapaValley12, sonoma_015, sonoma_016, sonoma_023, sonoma_032, sonoma_034, sonoma_038, sonoma_040, sonoma_045, sonoma_048, sonoma_050, sonoma_061, sonoma_073, sonoma_081, sonoma_085, sonoma_094, sonoma_097 and sonoma_119." evidence="10">
    <original>G</original>
    <variation>A</variation>
    <location>
        <position position="652"/>
    </location>
</feature>
<feature type="sequence variant" description="In strain: sonoma_008, sonoma_015, sonoma_016, sonoma_032, sonoma_034, sonoma_038, sonoma_040, sonoma_045, sonoma_048, sonoma_050, sonoma_061, sonoma_073, sonoma_081, sonoma_085, sonoma_094 and sonoma_097." evidence="10">
    <original>L</original>
    <variation>M</variation>
    <location>
        <position position="662"/>
    </location>
</feature>
<feature type="sequence variant" description="In strain: sonoma_006, sonoma_022 and sonoma_040.">
    <original>A</original>
    <variation>T</variation>
    <location>
        <position position="761"/>
    </location>
</feature>
<feature type="sequence variant" description="In strain: nps_6, nps_18, nps_34, sonoma_048 and sonoma_050.">
    <original>S</original>
    <variation>G</variation>
    <location>
        <position position="787"/>
    </location>
</feature>
<feature type="sequence variant" description="In strain: sonoma_002.">
    <original>G</original>
    <variation>R</variation>
    <location>
        <position position="800"/>
    </location>
</feature>
<feature type="sequence variant" description="In strain: nps_19, nps_21, nps_25, nps_26, nps_27, nps_30, nps_31, nps_33, nps_35, nps_42, nps_43, nps_45, nps_47, sonoma_002, sonoma_003, sonoma_004, sonoma_005, sonoma_006, sonoma_007, sonoma_008, sonoma_009, sonoma_014, sonoma_016, sonoma_017, sonoma_022, sonoma_024, sonoma_032, sonoma_033, sonoma_036, sonoma_038, sonoma_045, sonoma_051, sonoma_053, sonoma_054, sonoma_055, sonoma_059, sonoma_061, sonoma_064, sonoma_081, sonoma_086, sonoma_087, sonoma_094, sonoma_095, sonoma_097, sonoma_106, sonoma_107 and sonoma_119." evidence="12">
    <original>V</original>
    <variation>A</variation>
    <location>
        <position position="812"/>
    </location>
</feature>
<feature type="sequence conflict" description="In Ref. 8; CAA28786." evidence="14" ref="8">
    <original>GK</original>
    <variation>ET</variation>
    <location>
        <begin position="437"/>
        <end position="438"/>
    </location>
</feature>
<feature type="sequence conflict" description="In Ref. 8; CAA28786." evidence="14" ref="8">
    <original>A</original>
    <variation>S</variation>
    <location>
        <position position="443"/>
    </location>
</feature>
<feature type="sequence conflict" description="In Ref. 8; CAA28786." evidence="14" ref="8">
    <original>G</original>
    <variation>A</variation>
    <location>
        <position position="459"/>
    </location>
</feature>
<feature type="sequence conflict" description="In Ref. 8; CAA28786." evidence="14" ref="8">
    <original>S</original>
    <variation>T</variation>
    <location>
        <position position="490"/>
    </location>
</feature>
<feature type="sequence conflict" description="In Ref. 8; CAA28786." evidence="14" ref="8">
    <original>T</original>
    <variation>A</variation>
    <location>
        <position position="591"/>
    </location>
</feature>
<feature type="strand" evidence="16">
    <location>
        <begin position="25"/>
        <end position="34"/>
    </location>
</feature>
<feature type="strand" evidence="16">
    <location>
        <begin position="43"/>
        <end position="47"/>
    </location>
</feature>
<feature type="strand" evidence="16">
    <location>
        <begin position="52"/>
        <end position="54"/>
    </location>
</feature>
<feature type="strand" evidence="16">
    <location>
        <begin position="57"/>
        <end position="59"/>
    </location>
</feature>
<feature type="strand" evidence="16">
    <location>
        <begin position="62"/>
        <end position="70"/>
    </location>
</feature>
<feature type="strand" evidence="16">
    <location>
        <begin position="78"/>
        <end position="80"/>
    </location>
</feature>
<feature type="strand" evidence="16">
    <location>
        <begin position="83"/>
        <end position="88"/>
    </location>
</feature>
<feature type="strand" evidence="16">
    <location>
        <begin position="93"/>
        <end position="98"/>
    </location>
</feature>
<feature type="strand" evidence="16">
    <location>
        <begin position="112"/>
        <end position="117"/>
    </location>
</feature>
<feature type="strand" evidence="16">
    <location>
        <begin position="124"/>
        <end position="135"/>
    </location>
</feature>
<feature type="strand" evidence="16">
    <location>
        <begin position="146"/>
        <end position="157"/>
    </location>
</feature>
<feature type="strand" evidence="16">
    <location>
        <begin position="165"/>
        <end position="170"/>
    </location>
</feature>
<feature type="strand" evidence="16">
    <location>
        <begin position="175"/>
        <end position="183"/>
    </location>
</feature>
<feature type="turn" evidence="16">
    <location>
        <begin position="190"/>
        <end position="193"/>
    </location>
</feature>
<feature type="strand" evidence="16">
    <location>
        <begin position="200"/>
        <end position="202"/>
    </location>
</feature>
<feature type="strand" evidence="16">
    <location>
        <begin position="205"/>
        <end position="209"/>
    </location>
</feature>
<feature type="strand" evidence="16">
    <location>
        <begin position="211"/>
        <end position="213"/>
    </location>
</feature>
<feature type="strand" evidence="16">
    <location>
        <begin position="215"/>
        <end position="217"/>
    </location>
</feature>
<feature type="strand" evidence="16">
    <location>
        <begin position="221"/>
        <end position="225"/>
    </location>
</feature>
<feature type="strand" evidence="16">
    <location>
        <begin position="241"/>
        <end position="244"/>
    </location>
</feature>
<feature type="turn" evidence="16">
    <location>
        <begin position="254"/>
        <end position="257"/>
    </location>
</feature>
<reference key="1">
    <citation type="journal article" date="1987" name="EMBO J.">
        <title>The neurogenic gene Delta of Drosophila melanogaster is expressed in neurogenic territories and encodes a putative transmembrane protein with EGF-like repeats.</title>
        <authorList>
            <person name="Vaessin H."/>
            <person name="Bremer K.A."/>
            <person name="Knust E."/>
            <person name="Campos-Ortega J.A."/>
        </authorList>
    </citation>
    <scope>NUCLEOTIDE SEQUENCE [MRNA]</scope>
    <scope>TISSUE SPECIFICITY</scope>
    <scope>DEVELOPMENTAL STAGE</scope>
    <scope>VARIANTS ALA-652 AND MET-662</scope>
    <source>
        <tissue>Embryo</tissue>
    </source>
</reference>
<reference key="2">
    <citation type="journal article" date="1988" name="Genes Dev.">
        <title>Delta, a Drosophila neurogenic gene, is transcriptionally complex and encodes a protein related to blood coagulation factors and epidermal growth factor of vertebrates.</title>
        <authorList>
            <person name="Kopczynski C.C."/>
            <person name="Alton A.K."/>
            <person name="Fechtel K."/>
            <person name="Kooh P.J."/>
            <person name="Muskavitch M.A.T."/>
        </authorList>
    </citation>
    <scope>NUCLEOTIDE SEQUENCE [MRNA]</scope>
    <scope>VARIANT ALA-812</scope>
    <source>
        <strain>Oregon-R</strain>
        <tissue>Embryo</tissue>
    </source>
</reference>
<reference key="3">
    <citation type="journal article" date="2004" name="Genetics">
        <title>No evidence for an association between common nonsynonymous polymorphisms in delta and bristle number variation in natural and laboratory populations of Drosophila melanogaster.</title>
        <authorList>
            <person name="Genissel A."/>
            <person name="Pastinen T."/>
            <person name="Dowell A."/>
            <person name="Mackay T.F.C."/>
            <person name="Long A.D."/>
        </authorList>
    </citation>
    <scope>NUCLEOTIDE SEQUENCE [GENOMIC DNA]</scope>
    <source>
        <strain>NapaValley1</strain>
        <strain>NapaValley10</strain>
        <strain>NapaValley11</strain>
        <strain>NapaValley12</strain>
        <strain>NapaValley2</strain>
        <strain>NapaValley3</strain>
        <strain>NapaValley4</strain>
        <strain>NapaValley5</strain>
        <strain>NapaValley6</strain>
        <strain>NapaValley7</strain>
        <strain>NapaValley8</strain>
        <strain>NapaValley9</strain>
        <strain>nps_1</strain>
        <strain>nps_13</strain>
        <strain>nps_14</strain>
        <strain>nps_15</strain>
        <strain>nps_16</strain>
        <strain>nps_17</strain>
        <strain>nps_18</strain>
        <strain>nps_19</strain>
        <strain>nps_2</strain>
        <strain>nps_20</strain>
        <strain>nps_21</strain>
        <strain>nps_23</strain>
        <strain>nps_24</strain>
        <strain>nps_25</strain>
        <strain>nps_26</strain>
        <strain>nps_27</strain>
        <strain>nps_28</strain>
        <strain>nps_29</strain>
        <strain>nps_3</strain>
        <strain>nps_30</strain>
        <strain>nps_31</strain>
        <strain>nps_32</strain>
        <strain>nps_33</strain>
        <strain>nps_34</strain>
        <strain>nps_35</strain>
        <strain>nps_36</strain>
        <strain>nps_37</strain>
        <strain>nps_38</strain>
        <strain>nps_39</strain>
        <strain>nps_4</strain>
        <strain>nps_40</strain>
        <strain>nps_41</strain>
        <strain>nps_42</strain>
        <strain>nps_43</strain>
        <strain>nps_44</strain>
        <strain>nps_45</strain>
        <strain>nps_46</strain>
        <strain>nps_47</strain>
        <strain>nps_48</strain>
        <strain>nps_49</strain>
        <strain>nps_5</strain>
        <strain>nps_50</strain>
        <strain>nps_6</strain>
        <strain>sonoma_002</strain>
        <strain>sonoma_003</strain>
        <strain>sonoma_004</strain>
        <strain>sonoma_005</strain>
        <strain>sonoma_006</strain>
        <strain>sonoma_007</strain>
        <strain>sonoma_008</strain>
        <strain>sonoma_009</strain>
        <strain>sonoma_010</strain>
        <strain>sonoma_013</strain>
        <strain>sonoma_014</strain>
        <strain>sonoma_015</strain>
        <strain>sonoma_016</strain>
        <strain>sonoma_017</strain>
        <strain>sonoma_019</strain>
        <strain>sonoma_022</strain>
        <strain>sonoma_023</strain>
        <strain>sonoma_024</strain>
        <strain>sonoma_031</strain>
        <strain>sonoma_032</strain>
        <strain>sonoma_033</strain>
        <strain>sonoma_034</strain>
        <strain>sonoma_036</strain>
        <strain>sonoma_038</strain>
        <strain>sonoma_039</strain>
        <strain>sonoma_040</strain>
        <strain>sonoma_045</strain>
        <strain>sonoma_046</strain>
        <strain>sonoma_048</strain>
        <strain>sonoma_050</strain>
        <strain>sonoma_051</strain>
        <strain>sonoma_053</strain>
        <strain>sonoma_054</strain>
        <strain>sonoma_055</strain>
        <strain>sonoma_058</strain>
        <strain>sonoma_059</strain>
        <strain>sonoma_061</strain>
        <strain>sonoma_064</strain>
        <strain>sonoma_073</strain>
        <strain>sonoma_074</strain>
        <strain>sonoma_081</strain>
        <strain>sonoma_085</strain>
        <strain>sonoma_086</strain>
        <strain>sonoma_087</strain>
        <strain>sonoma_094</strain>
        <strain>sonoma_095</strain>
        <strain>sonoma_097</strain>
        <strain>sonoma_101</strain>
        <strain>sonoma_106</strain>
        <strain>sonoma_107</strain>
        <strain>sonoma_111</strain>
        <strain>sonoma_116</strain>
        <strain>sonoma_117</strain>
        <strain>sonoma_119</strain>
    </source>
</reference>
<reference key="4">
    <citation type="journal article" date="2000" name="Science">
        <title>The genome sequence of Drosophila melanogaster.</title>
        <authorList>
            <person name="Adams M.D."/>
            <person name="Celniker S.E."/>
            <person name="Holt R.A."/>
            <person name="Evans C.A."/>
            <person name="Gocayne J.D."/>
            <person name="Amanatides P.G."/>
            <person name="Scherer S.E."/>
            <person name="Li P.W."/>
            <person name="Hoskins R.A."/>
            <person name="Galle R.F."/>
            <person name="George R.A."/>
            <person name="Lewis S.E."/>
            <person name="Richards S."/>
            <person name="Ashburner M."/>
            <person name="Henderson S.N."/>
            <person name="Sutton G.G."/>
            <person name="Wortman J.R."/>
            <person name="Yandell M.D."/>
            <person name="Zhang Q."/>
            <person name="Chen L.X."/>
            <person name="Brandon R.C."/>
            <person name="Rogers Y.-H.C."/>
            <person name="Blazej R.G."/>
            <person name="Champe M."/>
            <person name="Pfeiffer B.D."/>
            <person name="Wan K.H."/>
            <person name="Doyle C."/>
            <person name="Baxter E.G."/>
            <person name="Helt G."/>
            <person name="Nelson C.R."/>
            <person name="Miklos G.L.G."/>
            <person name="Abril J.F."/>
            <person name="Agbayani A."/>
            <person name="An H.-J."/>
            <person name="Andrews-Pfannkoch C."/>
            <person name="Baldwin D."/>
            <person name="Ballew R.M."/>
            <person name="Basu A."/>
            <person name="Baxendale J."/>
            <person name="Bayraktaroglu L."/>
            <person name="Beasley E.M."/>
            <person name="Beeson K.Y."/>
            <person name="Benos P.V."/>
            <person name="Berman B.P."/>
            <person name="Bhandari D."/>
            <person name="Bolshakov S."/>
            <person name="Borkova D."/>
            <person name="Botchan M.R."/>
            <person name="Bouck J."/>
            <person name="Brokstein P."/>
            <person name="Brottier P."/>
            <person name="Burtis K.C."/>
            <person name="Busam D.A."/>
            <person name="Butler H."/>
            <person name="Cadieu E."/>
            <person name="Center A."/>
            <person name="Chandra I."/>
            <person name="Cherry J.M."/>
            <person name="Cawley S."/>
            <person name="Dahlke C."/>
            <person name="Davenport L.B."/>
            <person name="Davies P."/>
            <person name="de Pablos B."/>
            <person name="Delcher A."/>
            <person name="Deng Z."/>
            <person name="Mays A.D."/>
            <person name="Dew I."/>
            <person name="Dietz S.M."/>
            <person name="Dodson K."/>
            <person name="Doup L.E."/>
            <person name="Downes M."/>
            <person name="Dugan-Rocha S."/>
            <person name="Dunkov B.C."/>
            <person name="Dunn P."/>
            <person name="Durbin K.J."/>
            <person name="Evangelista C.C."/>
            <person name="Ferraz C."/>
            <person name="Ferriera S."/>
            <person name="Fleischmann W."/>
            <person name="Fosler C."/>
            <person name="Gabrielian A.E."/>
            <person name="Garg N.S."/>
            <person name="Gelbart W.M."/>
            <person name="Glasser K."/>
            <person name="Glodek A."/>
            <person name="Gong F."/>
            <person name="Gorrell J.H."/>
            <person name="Gu Z."/>
            <person name="Guan P."/>
            <person name="Harris M."/>
            <person name="Harris N.L."/>
            <person name="Harvey D.A."/>
            <person name="Heiman T.J."/>
            <person name="Hernandez J.R."/>
            <person name="Houck J."/>
            <person name="Hostin D."/>
            <person name="Houston K.A."/>
            <person name="Howland T.J."/>
            <person name="Wei M.-H."/>
            <person name="Ibegwam C."/>
            <person name="Jalali M."/>
            <person name="Kalush F."/>
            <person name="Karpen G.H."/>
            <person name="Ke Z."/>
            <person name="Kennison J.A."/>
            <person name="Ketchum K.A."/>
            <person name="Kimmel B.E."/>
            <person name="Kodira C.D."/>
            <person name="Kraft C.L."/>
            <person name="Kravitz S."/>
            <person name="Kulp D."/>
            <person name="Lai Z."/>
            <person name="Lasko P."/>
            <person name="Lei Y."/>
            <person name="Levitsky A.A."/>
            <person name="Li J.H."/>
            <person name="Li Z."/>
            <person name="Liang Y."/>
            <person name="Lin X."/>
            <person name="Liu X."/>
            <person name="Mattei B."/>
            <person name="McIntosh T.C."/>
            <person name="McLeod M.P."/>
            <person name="McPherson D."/>
            <person name="Merkulov G."/>
            <person name="Milshina N.V."/>
            <person name="Mobarry C."/>
            <person name="Morris J."/>
            <person name="Moshrefi A."/>
            <person name="Mount S.M."/>
            <person name="Moy M."/>
            <person name="Murphy B."/>
            <person name="Murphy L."/>
            <person name="Muzny D.M."/>
            <person name="Nelson D.L."/>
            <person name="Nelson D.R."/>
            <person name="Nelson K.A."/>
            <person name="Nixon K."/>
            <person name="Nusskern D.R."/>
            <person name="Pacleb J.M."/>
            <person name="Palazzolo M."/>
            <person name="Pittman G.S."/>
            <person name="Pan S."/>
            <person name="Pollard J."/>
            <person name="Puri V."/>
            <person name="Reese M.G."/>
            <person name="Reinert K."/>
            <person name="Remington K."/>
            <person name="Saunders R.D.C."/>
            <person name="Scheeler F."/>
            <person name="Shen H."/>
            <person name="Shue B.C."/>
            <person name="Siden-Kiamos I."/>
            <person name="Simpson M."/>
            <person name="Skupski M.P."/>
            <person name="Smith T.J."/>
            <person name="Spier E."/>
            <person name="Spradling A.C."/>
            <person name="Stapleton M."/>
            <person name="Strong R."/>
            <person name="Sun E."/>
            <person name="Svirskas R."/>
            <person name="Tector C."/>
            <person name="Turner R."/>
            <person name="Venter E."/>
            <person name="Wang A.H."/>
            <person name="Wang X."/>
            <person name="Wang Z.-Y."/>
            <person name="Wassarman D.A."/>
            <person name="Weinstock G.M."/>
            <person name="Weissenbach J."/>
            <person name="Williams S.M."/>
            <person name="Woodage T."/>
            <person name="Worley K.C."/>
            <person name="Wu D."/>
            <person name="Yang S."/>
            <person name="Yao Q.A."/>
            <person name="Ye J."/>
            <person name="Yeh R.-F."/>
            <person name="Zaveri J.S."/>
            <person name="Zhan M."/>
            <person name="Zhang G."/>
            <person name="Zhao Q."/>
            <person name="Zheng L."/>
            <person name="Zheng X.H."/>
            <person name="Zhong F.N."/>
            <person name="Zhong W."/>
            <person name="Zhou X."/>
            <person name="Zhu S.C."/>
            <person name="Zhu X."/>
            <person name="Smith H.O."/>
            <person name="Gibbs R.A."/>
            <person name="Myers E.W."/>
            <person name="Rubin G.M."/>
            <person name="Venter J.C."/>
        </authorList>
    </citation>
    <scope>NUCLEOTIDE SEQUENCE [LARGE SCALE GENOMIC DNA]</scope>
    <source>
        <strain>Berkeley</strain>
    </source>
</reference>
<reference key="5">
    <citation type="journal article" date="2002" name="Genome Biol.">
        <title>Annotation of the Drosophila melanogaster euchromatic genome: a systematic review.</title>
        <authorList>
            <person name="Misra S."/>
            <person name="Crosby M.A."/>
            <person name="Mungall C.J."/>
            <person name="Matthews B.B."/>
            <person name="Campbell K.S."/>
            <person name="Hradecky P."/>
            <person name="Huang Y."/>
            <person name="Kaminker J.S."/>
            <person name="Millburn G.H."/>
            <person name="Prochnik S.E."/>
            <person name="Smith C.D."/>
            <person name="Tupy J.L."/>
            <person name="Whitfield E.J."/>
            <person name="Bayraktaroglu L."/>
            <person name="Berman B.P."/>
            <person name="Bettencourt B.R."/>
            <person name="Celniker S.E."/>
            <person name="de Grey A.D.N.J."/>
            <person name="Drysdale R.A."/>
            <person name="Harris N.L."/>
            <person name="Richter J."/>
            <person name="Russo S."/>
            <person name="Schroeder A.J."/>
            <person name="Shu S.Q."/>
            <person name="Stapleton M."/>
            <person name="Yamada C."/>
            <person name="Ashburner M."/>
            <person name="Gelbart W.M."/>
            <person name="Rubin G.M."/>
            <person name="Lewis S.E."/>
        </authorList>
    </citation>
    <scope>GENOME REANNOTATION</scope>
    <source>
        <strain>Berkeley</strain>
    </source>
</reference>
<reference key="6">
    <citation type="submission" date="2003-01" db="EMBL/GenBank/DDBJ databases">
        <authorList>
            <person name="Stapleton M."/>
            <person name="Brokstein P."/>
            <person name="Hong L."/>
            <person name="Agbayani A."/>
            <person name="Carlson J.W."/>
            <person name="Champe M."/>
            <person name="Chavez C."/>
            <person name="Dorsett V."/>
            <person name="Dresnek D."/>
            <person name="Farfan D."/>
            <person name="Frise E."/>
            <person name="George R.A."/>
            <person name="Gonzalez M."/>
            <person name="Guarin H."/>
            <person name="Kronmiller B."/>
            <person name="Li P.W."/>
            <person name="Liao G."/>
            <person name="Miranda A."/>
            <person name="Mungall C.J."/>
            <person name="Nunoo J."/>
            <person name="Pacleb J.M."/>
            <person name="Paragas V."/>
            <person name="Park S."/>
            <person name="Patel S."/>
            <person name="Phouanenavong S."/>
            <person name="Wan K.H."/>
            <person name="Yu C."/>
            <person name="Lewis S.E."/>
            <person name="Rubin G.M."/>
            <person name="Celniker S.E."/>
        </authorList>
    </citation>
    <scope>NUCLEOTIDE SEQUENCE [LARGE SCALE MRNA]</scope>
    <source>
        <strain>Berkeley</strain>
        <tissue>Embryo</tissue>
    </source>
</reference>
<reference key="7">
    <citation type="journal article" date="2002" name="Genome Biol.">
        <title>A Drosophila full-length cDNA resource.</title>
        <authorList>
            <person name="Stapleton M."/>
            <person name="Carlson J.W."/>
            <person name="Brokstein P."/>
            <person name="Yu C."/>
            <person name="Champe M."/>
            <person name="George R.A."/>
            <person name="Guarin H."/>
            <person name="Kronmiller B."/>
            <person name="Pacleb J.M."/>
            <person name="Park S."/>
            <person name="Wan K.H."/>
            <person name="Rubin G.M."/>
            <person name="Celniker S.E."/>
        </authorList>
    </citation>
    <scope>NUCLEOTIDE SEQUENCE [LARGE SCALE MRNA] OF 195-833</scope>
    <source>
        <strain>Berkeley</strain>
        <tissue>Embryo</tissue>
    </source>
</reference>
<reference key="8">
    <citation type="journal article" date="1987" name="EMBO J.">
        <title>EGF homologous sequences encoded in the genome of Drosophila melanogaster, and their relation to neurogenic genes.</title>
        <authorList>
            <person name="Knust E."/>
            <person name="Dietrich U."/>
            <person name="Tepass U."/>
            <person name="Bremer K.A."/>
            <person name="Weigel D."/>
            <person name="Vaessin H."/>
            <person name="Campos-Ortega J.A."/>
        </authorList>
    </citation>
    <scope>NUCLEOTIDE SEQUENCE [MRNA] OF 422-621</scope>
    <source>
        <tissue>Embryo</tissue>
    </source>
</reference>
<reference key="9">
    <citation type="journal article" date="2000" name="Nature">
        <title>Glycosyltransferase activity of Fringe modulates Notch-Delta interactions.</title>
        <authorList>
            <person name="Bruckner K."/>
            <person name="Perez L."/>
            <person name="Clausen H."/>
            <person name="Cohen S."/>
        </authorList>
    </citation>
    <scope>FUNCTION</scope>
    <scope>INTERACTION WITH N</scope>
</reference>
<reference key="10">
    <citation type="journal article" date="1990" name="Development">
        <title>The pattern of transcription of the neurogenic gene Delta of Drosophila melanogaster.</title>
        <authorList>
            <person name="Haenlin M."/>
            <person name="Kramatschek B."/>
            <person name="Campos-Ortega J.A."/>
        </authorList>
    </citation>
    <scope>PATTERN OF TRANSCRIPTION</scope>
    <scope>CHARACTERIZATION</scope>
</reference>
<reference key="11">
    <citation type="journal article" date="2005" name="Development">
        <title>The ubiquitin ligase Drosophila Mind bomb promotes Notch signaling by regulating the localization and activity of Serrate and Delta.</title>
        <authorList>
            <person name="Lai E.C."/>
            <person name="Roegiers F."/>
            <person name="Qin X."/>
            <person name="Jan Y.N."/>
            <person name="Rubin G.M."/>
        </authorList>
    </citation>
    <scope>INTERACTION WITH MIB</scope>
    <scope>UBIQUITINATION</scope>
</reference>
<reference key="12">
    <citation type="journal article" date="2005" name="PLoS Biol.">
        <title>Two distinct E3 ubiquitin ligases have complementary functions in the regulation of delta and serrate signaling in Drosophila.</title>
        <authorList>
            <person name="Le Borgne R."/>
            <person name="Remaud S."/>
            <person name="Hamel S."/>
            <person name="Schweisguth F."/>
        </authorList>
    </citation>
    <scope>UBIQUITINATION</scope>
</reference>
<reference key="13">
    <citation type="journal article" date="2008" name="J. Proteome Res.">
        <title>Phosphoproteome analysis of Drosophila melanogaster embryos.</title>
        <authorList>
            <person name="Zhai B."/>
            <person name="Villen J."/>
            <person name="Beausoleil S.A."/>
            <person name="Mintseris J."/>
            <person name="Gygi S.P."/>
        </authorList>
    </citation>
    <scope>PHOSPHORYLATION [LARGE SCALE ANALYSIS] AT THR-666</scope>
    <scope>IDENTIFICATION BY MASS SPECTROMETRY</scope>
    <source>
        <tissue>Embryo</tissue>
    </source>
</reference>
<accession>P10041</accession>
<accession>Q6T3F7</accession>
<accession>Q6T3G1</accession>
<accession>Q6T3G7</accession>
<accession>Q6T3G8</accession>
<accession>Q6T3H0</accession>
<accession>Q6T3H3</accession>
<accession>Q6T3I3</accession>
<accession>Q6T3I5</accession>
<accession>Q6T3I7</accession>
<accession>Q6T3J1</accession>
<accession>Q6T3J2</accession>
<accession>Q6T3J3</accession>
<accession>Q6T3J4</accession>
<accession>Q6T3K0</accession>
<accession>Q6T3K1</accession>
<accession>Q6T3K9</accession>
<accession>Q6T3L5</accession>
<accession>Q6T3L7</accession>
<accession>Q6T3L9</accession>
<accession>Q6T3M2</accession>
<accession>Q6T3M4</accession>
<accession>Q6T3M7</accession>
<accession>Q6T3N1</accession>
<accession>Q6T3N3</accession>
<accession>Q6T3N5</accession>
<accession>Q6T3N7</accession>
<accession>Q6T4M9</accession>
<accession>Q6T4N0</accession>
<accession>Q6T4N1</accession>
<accession>Q6T4N2</accession>
<accession>Q6T4N3</accession>
<accession>Q6T4N4</accession>
<accession>Q6T4N6</accession>
<accession>Q95RM9</accession>
<accession>Q99108</accession>
<accession>Q9VDY2</accession>
<dbReference type="EMBL" id="X06289">
    <property type="protein sequence ID" value="CAA29617.1"/>
    <property type="molecule type" value="mRNA"/>
</dbReference>
<dbReference type="EMBL" id="Y00222">
    <property type="protein sequence ID" value="CAA68369.1"/>
    <property type="molecule type" value="mRNA"/>
</dbReference>
<dbReference type="EMBL" id="AY437145">
    <property type="protein sequence ID" value="AAR21453.1"/>
    <property type="molecule type" value="Genomic_DNA"/>
</dbReference>
<dbReference type="EMBL" id="AY437140">
    <property type="protein sequence ID" value="AAR21453.1"/>
    <property type="status" value="JOINED"/>
    <property type="molecule type" value="Genomic_DNA"/>
</dbReference>
<dbReference type="EMBL" id="AY437141">
    <property type="protein sequence ID" value="AAR21453.1"/>
    <property type="status" value="JOINED"/>
    <property type="molecule type" value="Genomic_DNA"/>
</dbReference>
<dbReference type="EMBL" id="AY437142">
    <property type="protein sequence ID" value="AAR21453.1"/>
    <property type="status" value="JOINED"/>
    <property type="molecule type" value="Genomic_DNA"/>
</dbReference>
<dbReference type="EMBL" id="AY437143">
    <property type="protein sequence ID" value="AAR21453.1"/>
    <property type="status" value="JOINED"/>
    <property type="molecule type" value="Genomic_DNA"/>
</dbReference>
<dbReference type="EMBL" id="AY437144">
    <property type="protein sequence ID" value="AAR21453.1"/>
    <property type="status" value="JOINED"/>
    <property type="molecule type" value="Genomic_DNA"/>
</dbReference>
<dbReference type="EMBL" id="AY437151">
    <property type="protein sequence ID" value="AAR21454.1"/>
    <property type="molecule type" value="Genomic_DNA"/>
</dbReference>
<dbReference type="EMBL" id="AY437146">
    <property type="protein sequence ID" value="AAR21454.1"/>
    <property type="status" value="JOINED"/>
    <property type="molecule type" value="Genomic_DNA"/>
</dbReference>
<dbReference type="EMBL" id="AY437147">
    <property type="protein sequence ID" value="AAR21454.1"/>
    <property type="status" value="JOINED"/>
    <property type="molecule type" value="Genomic_DNA"/>
</dbReference>
<dbReference type="EMBL" id="AY437148">
    <property type="protein sequence ID" value="AAR21454.1"/>
    <property type="status" value="JOINED"/>
    <property type="molecule type" value="Genomic_DNA"/>
</dbReference>
<dbReference type="EMBL" id="AY437149">
    <property type="protein sequence ID" value="AAR21454.1"/>
    <property type="status" value="JOINED"/>
    <property type="molecule type" value="Genomic_DNA"/>
</dbReference>
<dbReference type="EMBL" id="AY437150">
    <property type="protein sequence ID" value="AAR21454.1"/>
    <property type="status" value="JOINED"/>
    <property type="molecule type" value="Genomic_DNA"/>
</dbReference>
<dbReference type="EMBL" id="AY437157">
    <property type="protein sequence ID" value="AAR21455.1"/>
    <property type="molecule type" value="Genomic_DNA"/>
</dbReference>
<dbReference type="EMBL" id="AY437152">
    <property type="protein sequence ID" value="AAR21455.1"/>
    <property type="status" value="JOINED"/>
    <property type="molecule type" value="Genomic_DNA"/>
</dbReference>
<dbReference type="EMBL" id="AY437153">
    <property type="protein sequence ID" value="AAR21455.1"/>
    <property type="status" value="JOINED"/>
    <property type="molecule type" value="Genomic_DNA"/>
</dbReference>
<dbReference type="EMBL" id="AY437154">
    <property type="protein sequence ID" value="AAR21455.1"/>
    <property type="status" value="JOINED"/>
    <property type="molecule type" value="Genomic_DNA"/>
</dbReference>
<dbReference type="EMBL" id="AY437155">
    <property type="protein sequence ID" value="AAR21455.1"/>
    <property type="status" value="JOINED"/>
    <property type="molecule type" value="Genomic_DNA"/>
</dbReference>
<dbReference type="EMBL" id="AY437156">
    <property type="protein sequence ID" value="AAR21455.1"/>
    <property type="status" value="JOINED"/>
    <property type="molecule type" value="Genomic_DNA"/>
</dbReference>
<dbReference type="EMBL" id="AY437163">
    <property type="protein sequence ID" value="AAR21456.1"/>
    <property type="molecule type" value="Genomic_DNA"/>
</dbReference>
<dbReference type="EMBL" id="AY437158">
    <property type="protein sequence ID" value="AAR21456.1"/>
    <property type="status" value="JOINED"/>
    <property type="molecule type" value="Genomic_DNA"/>
</dbReference>
<dbReference type="EMBL" id="AY437159">
    <property type="protein sequence ID" value="AAR21456.1"/>
    <property type="status" value="JOINED"/>
    <property type="molecule type" value="Genomic_DNA"/>
</dbReference>
<dbReference type="EMBL" id="AY437160">
    <property type="protein sequence ID" value="AAR21456.1"/>
    <property type="status" value="JOINED"/>
    <property type="molecule type" value="Genomic_DNA"/>
</dbReference>
<dbReference type="EMBL" id="AY437161">
    <property type="protein sequence ID" value="AAR21456.1"/>
    <property type="status" value="JOINED"/>
    <property type="molecule type" value="Genomic_DNA"/>
</dbReference>
<dbReference type="EMBL" id="AY437162">
    <property type="protein sequence ID" value="AAR21456.1"/>
    <property type="status" value="JOINED"/>
    <property type="molecule type" value="Genomic_DNA"/>
</dbReference>
<dbReference type="EMBL" id="AY437169">
    <property type="protein sequence ID" value="AAR21457.1"/>
    <property type="molecule type" value="Genomic_DNA"/>
</dbReference>
<dbReference type="EMBL" id="AY437164">
    <property type="protein sequence ID" value="AAR21457.1"/>
    <property type="status" value="JOINED"/>
    <property type="molecule type" value="Genomic_DNA"/>
</dbReference>
<dbReference type="EMBL" id="AY437165">
    <property type="protein sequence ID" value="AAR21457.1"/>
    <property type="status" value="JOINED"/>
    <property type="molecule type" value="Genomic_DNA"/>
</dbReference>
<dbReference type="EMBL" id="AY437166">
    <property type="protein sequence ID" value="AAR21457.1"/>
    <property type="status" value="JOINED"/>
    <property type="molecule type" value="Genomic_DNA"/>
</dbReference>
<dbReference type="EMBL" id="AY437167">
    <property type="protein sequence ID" value="AAR21457.1"/>
    <property type="status" value="JOINED"/>
    <property type="molecule type" value="Genomic_DNA"/>
</dbReference>
<dbReference type="EMBL" id="AY437168">
    <property type="protein sequence ID" value="AAR21457.1"/>
    <property type="status" value="JOINED"/>
    <property type="molecule type" value="Genomic_DNA"/>
</dbReference>
<dbReference type="EMBL" id="AY437175">
    <property type="protein sequence ID" value="AAR21458.1"/>
    <property type="molecule type" value="Genomic_DNA"/>
</dbReference>
<dbReference type="EMBL" id="AY437170">
    <property type="protein sequence ID" value="AAR21458.1"/>
    <property type="status" value="JOINED"/>
    <property type="molecule type" value="Genomic_DNA"/>
</dbReference>
<dbReference type="EMBL" id="AY437171">
    <property type="protein sequence ID" value="AAR21458.1"/>
    <property type="status" value="JOINED"/>
    <property type="molecule type" value="Genomic_DNA"/>
</dbReference>
<dbReference type="EMBL" id="AY437172">
    <property type="protein sequence ID" value="AAR21458.1"/>
    <property type="status" value="JOINED"/>
    <property type="molecule type" value="Genomic_DNA"/>
</dbReference>
<dbReference type="EMBL" id="AY437173">
    <property type="protein sequence ID" value="AAR21458.1"/>
    <property type="status" value="JOINED"/>
    <property type="molecule type" value="Genomic_DNA"/>
</dbReference>
<dbReference type="EMBL" id="AY437174">
    <property type="protein sequence ID" value="AAR21458.1"/>
    <property type="status" value="JOINED"/>
    <property type="molecule type" value="Genomic_DNA"/>
</dbReference>
<dbReference type="EMBL" id="AY437181">
    <property type="protein sequence ID" value="AAR21459.1"/>
    <property type="molecule type" value="Genomic_DNA"/>
</dbReference>
<dbReference type="EMBL" id="AY437176">
    <property type="protein sequence ID" value="AAR21459.1"/>
    <property type="status" value="JOINED"/>
    <property type="molecule type" value="Genomic_DNA"/>
</dbReference>
<dbReference type="EMBL" id="AY437177">
    <property type="protein sequence ID" value="AAR21459.1"/>
    <property type="status" value="JOINED"/>
    <property type="molecule type" value="Genomic_DNA"/>
</dbReference>
<dbReference type="EMBL" id="AY437178">
    <property type="protein sequence ID" value="AAR21459.1"/>
    <property type="status" value="JOINED"/>
    <property type="molecule type" value="Genomic_DNA"/>
</dbReference>
<dbReference type="EMBL" id="AY437179">
    <property type="protein sequence ID" value="AAR21459.1"/>
    <property type="status" value="JOINED"/>
    <property type="molecule type" value="Genomic_DNA"/>
</dbReference>
<dbReference type="EMBL" id="AY437180">
    <property type="protein sequence ID" value="AAR21459.1"/>
    <property type="status" value="JOINED"/>
    <property type="molecule type" value="Genomic_DNA"/>
</dbReference>
<dbReference type="EMBL" id="AY437187">
    <property type="protein sequence ID" value="AAR21460.1"/>
    <property type="molecule type" value="Genomic_DNA"/>
</dbReference>
<dbReference type="EMBL" id="AY437182">
    <property type="protein sequence ID" value="AAR21460.1"/>
    <property type="status" value="JOINED"/>
    <property type="molecule type" value="Genomic_DNA"/>
</dbReference>
<dbReference type="EMBL" id="AY437183">
    <property type="protein sequence ID" value="AAR21460.1"/>
    <property type="status" value="JOINED"/>
    <property type="molecule type" value="Genomic_DNA"/>
</dbReference>
<dbReference type="EMBL" id="AY437184">
    <property type="protein sequence ID" value="AAR21460.1"/>
    <property type="status" value="JOINED"/>
    <property type="molecule type" value="Genomic_DNA"/>
</dbReference>
<dbReference type="EMBL" id="AY437185">
    <property type="protein sequence ID" value="AAR21460.1"/>
    <property type="status" value="JOINED"/>
    <property type="molecule type" value="Genomic_DNA"/>
</dbReference>
<dbReference type="EMBL" id="AY437186">
    <property type="protein sequence ID" value="AAR21460.1"/>
    <property type="status" value="JOINED"/>
    <property type="molecule type" value="Genomic_DNA"/>
</dbReference>
<dbReference type="EMBL" id="AY437193">
    <property type="protein sequence ID" value="AAR21461.1"/>
    <property type="molecule type" value="Genomic_DNA"/>
</dbReference>
<dbReference type="EMBL" id="AY437188">
    <property type="protein sequence ID" value="AAR21461.1"/>
    <property type="status" value="JOINED"/>
    <property type="molecule type" value="Genomic_DNA"/>
</dbReference>
<dbReference type="EMBL" id="AY437189">
    <property type="protein sequence ID" value="AAR21461.1"/>
    <property type="status" value="JOINED"/>
    <property type="molecule type" value="Genomic_DNA"/>
</dbReference>
<dbReference type="EMBL" id="AY437190">
    <property type="protein sequence ID" value="AAR21461.1"/>
    <property type="status" value="JOINED"/>
    <property type="molecule type" value="Genomic_DNA"/>
</dbReference>
<dbReference type="EMBL" id="AY437191">
    <property type="protein sequence ID" value="AAR21461.1"/>
    <property type="status" value="JOINED"/>
    <property type="molecule type" value="Genomic_DNA"/>
</dbReference>
<dbReference type="EMBL" id="AY437192">
    <property type="protein sequence ID" value="AAR21461.1"/>
    <property type="status" value="JOINED"/>
    <property type="molecule type" value="Genomic_DNA"/>
</dbReference>
<dbReference type="EMBL" id="AY437199">
    <property type="protein sequence ID" value="AAR21462.1"/>
    <property type="molecule type" value="Genomic_DNA"/>
</dbReference>
<dbReference type="EMBL" id="AY437194">
    <property type="protein sequence ID" value="AAR21462.1"/>
    <property type="status" value="JOINED"/>
    <property type="molecule type" value="Genomic_DNA"/>
</dbReference>
<dbReference type="EMBL" id="AY437195">
    <property type="protein sequence ID" value="AAR21462.1"/>
    <property type="status" value="JOINED"/>
    <property type="molecule type" value="Genomic_DNA"/>
</dbReference>
<dbReference type="EMBL" id="AY437196">
    <property type="protein sequence ID" value="AAR21462.1"/>
    <property type="status" value="JOINED"/>
    <property type="molecule type" value="Genomic_DNA"/>
</dbReference>
<dbReference type="EMBL" id="AY437197">
    <property type="protein sequence ID" value="AAR21462.1"/>
    <property type="status" value="JOINED"/>
    <property type="molecule type" value="Genomic_DNA"/>
</dbReference>
<dbReference type="EMBL" id="AY437198">
    <property type="protein sequence ID" value="AAR21462.1"/>
    <property type="status" value="JOINED"/>
    <property type="molecule type" value="Genomic_DNA"/>
</dbReference>
<dbReference type="EMBL" id="AY437205">
    <property type="protein sequence ID" value="AAR21463.1"/>
    <property type="molecule type" value="Genomic_DNA"/>
</dbReference>
<dbReference type="EMBL" id="AY437200">
    <property type="protein sequence ID" value="AAR21463.1"/>
    <property type="status" value="JOINED"/>
    <property type="molecule type" value="Genomic_DNA"/>
</dbReference>
<dbReference type="EMBL" id="AY437201">
    <property type="protein sequence ID" value="AAR21463.1"/>
    <property type="status" value="JOINED"/>
    <property type="molecule type" value="Genomic_DNA"/>
</dbReference>
<dbReference type="EMBL" id="AY437202">
    <property type="protein sequence ID" value="AAR21463.1"/>
    <property type="status" value="JOINED"/>
    <property type="molecule type" value="Genomic_DNA"/>
</dbReference>
<dbReference type="EMBL" id="AY437203">
    <property type="protein sequence ID" value="AAR21463.1"/>
    <property type="status" value="JOINED"/>
    <property type="molecule type" value="Genomic_DNA"/>
</dbReference>
<dbReference type="EMBL" id="AY437204">
    <property type="protein sequence ID" value="AAR21463.1"/>
    <property type="status" value="JOINED"/>
    <property type="molecule type" value="Genomic_DNA"/>
</dbReference>
<dbReference type="EMBL" id="AY437211">
    <property type="protein sequence ID" value="AAR21464.1"/>
    <property type="molecule type" value="Genomic_DNA"/>
</dbReference>
<dbReference type="EMBL" id="AY437206">
    <property type="protein sequence ID" value="AAR21464.1"/>
    <property type="status" value="JOINED"/>
    <property type="molecule type" value="Genomic_DNA"/>
</dbReference>
<dbReference type="EMBL" id="AY437207">
    <property type="protein sequence ID" value="AAR21464.1"/>
    <property type="status" value="JOINED"/>
    <property type="molecule type" value="Genomic_DNA"/>
</dbReference>
<dbReference type="EMBL" id="AY437208">
    <property type="protein sequence ID" value="AAR21464.1"/>
    <property type="status" value="JOINED"/>
    <property type="molecule type" value="Genomic_DNA"/>
</dbReference>
<dbReference type="EMBL" id="AY437209">
    <property type="protein sequence ID" value="AAR21464.1"/>
    <property type="status" value="JOINED"/>
    <property type="molecule type" value="Genomic_DNA"/>
</dbReference>
<dbReference type="EMBL" id="AY437210">
    <property type="protein sequence ID" value="AAR21464.1"/>
    <property type="status" value="JOINED"/>
    <property type="molecule type" value="Genomic_DNA"/>
</dbReference>
<dbReference type="EMBL" id="AY437217">
    <property type="protein sequence ID" value="AAR21465.1"/>
    <property type="molecule type" value="Genomic_DNA"/>
</dbReference>
<dbReference type="EMBL" id="AY437212">
    <property type="protein sequence ID" value="AAR21465.1"/>
    <property type="status" value="JOINED"/>
    <property type="molecule type" value="Genomic_DNA"/>
</dbReference>
<dbReference type="EMBL" id="AY437213">
    <property type="protein sequence ID" value="AAR21465.1"/>
    <property type="status" value="JOINED"/>
    <property type="molecule type" value="Genomic_DNA"/>
</dbReference>
<dbReference type="EMBL" id="AY437214">
    <property type="protein sequence ID" value="AAR21465.1"/>
    <property type="status" value="JOINED"/>
    <property type="molecule type" value="Genomic_DNA"/>
</dbReference>
<dbReference type="EMBL" id="AY437215">
    <property type="protein sequence ID" value="AAR21465.1"/>
    <property type="status" value="JOINED"/>
    <property type="molecule type" value="Genomic_DNA"/>
</dbReference>
<dbReference type="EMBL" id="AY437216">
    <property type="protein sequence ID" value="AAR21465.1"/>
    <property type="status" value="JOINED"/>
    <property type="molecule type" value="Genomic_DNA"/>
</dbReference>
<dbReference type="EMBL" id="AY437223">
    <property type="protein sequence ID" value="AAR21466.1"/>
    <property type="molecule type" value="Genomic_DNA"/>
</dbReference>
<dbReference type="EMBL" id="AY437218">
    <property type="protein sequence ID" value="AAR21466.1"/>
    <property type="status" value="JOINED"/>
    <property type="molecule type" value="Genomic_DNA"/>
</dbReference>
<dbReference type="EMBL" id="AY437219">
    <property type="protein sequence ID" value="AAR21466.1"/>
    <property type="status" value="JOINED"/>
    <property type="molecule type" value="Genomic_DNA"/>
</dbReference>
<dbReference type="EMBL" id="AY437220">
    <property type="protein sequence ID" value="AAR21466.1"/>
    <property type="status" value="JOINED"/>
    <property type="molecule type" value="Genomic_DNA"/>
</dbReference>
<dbReference type="EMBL" id="AY437221">
    <property type="protein sequence ID" value="AAR21466.1"/>
    <property type="status" value="JOINED"/>
    <property type="molecule type" value="Genomic_DNA"/>
</dbReference>
<dbReference type="EMBL" id="AY437222">
    <property type="protein sequence ID" value="AAR21466.1"/>
    <property type="status" value="JOINED"/>
    <property type="molecule type" value="Genomic_DNA"/>
</dbReference>
<dbReference type="EMBL" id="AY437229">
    <property type="protein sequence ID" value="AAR21467.1"/>
    <property type="molecule type" value="Genomic_DNA"/>
</dbReference>
<dbReference type="EMBL" id="AY437224">
    <property type="protein sequence ID" value="AAR21467.1"/>
    <property type="status" value="JOINED"/>
    <property type="molecule type" value="Genomic_DNA"/>
</dbReference>
<dbReference type="EMBL" id="AY437225">
    <property type="protein sequence ID" value="AAR21467.1"/>
    <property type="status" value="JOINED"/>
    <property type="molecule type" value="Genomic_DNA"/>
</dbReference>
<dbReference type="EMBL" id="AY437226">
    <property type="protein sequence ID" value="AAR21467.1"/>
    <property type="status" value="JOINED"/>
    <property type="molecule type" value="Genomic_DNA"/>
</dbReference>
<dbReference type="EMBL" id="AY437227">
    <property type="protein sequence ID" value="AAR21467.1"/>
    <property type="status" value="JOINED"/>
    <property type="molecule type" value="Genomic_DNA"/>
</dbReference>
<dbReference type="EMBL" id="AY437228">
    <property type="protein sequence ID" value="AAR21467.1"/>
    <property type="status" value="JOINED"/>
    <property type="molecule type" value="Genomic_DNA"/>
</dbReference>
<dbReference type="EMBL" id="AY437235">
    <property type="protein sequence ID" value="AAR21468.1"/>
    <property type="molecule type" value="Genomic_DNA"/>
</dbReference>
<dbReference type="EMBL" id="AY437230">
    <property type="protein sequence ID" value="AAR21468.1"/>
    <property type="status" value="JOINED"/>
    <property type="molecule type" value="Genomic_DNA"/>
</dbReference>
<dbReference type="EMBL" id="AY437231">
    <property type="protein sequence ID" value="AAR21468.1"/>
    <property type="status" value="JOINED"/>
    <property type="molecule type" value="Genomic_DNA"/>
</dbReference>
<dbReference type="EMBL" id="AY437232">
    <property type="protein sequence ID" value="AAR21468.1"/>
    <property type="status" value="JOINED"/>
    <property type="molecule type" value="Genomic_DNA"/>
</dbReference>
<dbReference type="EMBL" id="AY437233">
    <property type="protein sequence ID" value="AAR21468.1"/>
    <property type="status" value="JOINED"/>
    <property type="molecule type" value="Genomic_DNA"/>
</dbReference>
<dbReference type="EMBL" id="AY437234">
    <property type="protein sequence ID" value="AAR21468.1"/>
    <property type="status" value="JOINED"/>
    <property type="molecule type" value="Genomic_DNA"/>
</dbReference>
<dbReference type="EMBL" id="AY438104">
    <property type="protein sequence ID" value="AAR21469.1"/>
    <property type="molecule type" value="Genomic_DNA"/>
</dbReference>
<dbReference type="EMBL" id="AY438105">
    <property type="protein sequence ID" value="AAR21470.1"/>
    <property type="molecule type" value="Genomic_DNA"/>
</dbReference>
<dbReference type="EMBL" id="AY438106">
    <property type="protein sequence ID" value="AAR21471.1"/>
    <property type="molecule type" value="Genomic_DNA"/>
</dbReference>
<dbReference type="EMBL" id="AY438107">
    <property type="protein sequence ID" value="AAR21472.1"/>
    <property type="molecule type" value="Genomic_DNA"/>
</dbReference>
<dbReference type="EMBL" id="AY438108">
    <property type="protein sequence ID" value="AAR21473.1"/>
    <property type="molecule type" value="Genomic_DNA"/>
</dbReference>
<dbReference type="EMBL" id="AY438109">
    <property type="protein sequence ID" value="AAR21474.1"/>
    <property type="molecule type" value="Genomic_DNA"/>
</dbReference>
<dbReference type="EMBL" id="AY438110">
    <property type="protein sequence ID" value="AAR21475.1"/>
    <property type="molecule type" value="Genomic_DNA"/>
</dbReference>
<dbReference type="EMBL" id="AY438111">
    <property type="protein sequence ID" value="AAR21476.1"/>
    <property type="molecule type" value="Genomic_DNA"/>
</dbReference>
<dbReference type="EMBL" id="AY438112">
    <property type="protein sequence ID" value="AAR21477.1"/>
    <property type="molecule type" value="Genomic_DNA"/>
</dbReference>
<dbReference type="EMBL" id="AY438113">
    <property type="protein sequence ID" value="AAR21478.1"/>
    <property type="molecule type" value="Genomic_DNA"/>
</dbReference>
<dbReference type="EMBL" id="AY438114">
    <property type="protein sequence ID" value="AAR21479.1"/>
    <property type="molecule type" value="Genomic_DNA"/>
</dbReference>
<dbReference type="EMBL" id="AY438115">
    <property type="protein sequence ID" value="AAR21480.1"/>
    <property type="molecule type" value="Genomic_DNA"/>
</dbReference>
<dbReference type="EMBL" id="AY438116">
    <property type="protein sequence ID" value="AAR21481.1"/>
    <property type="molecule type" value="Genomic_DNA"/>
</dbReference>
<dbReference type="EMBL" id="AY438117">
    <property type="protein sequence ID" value="AAR21482.1"/>
    <property type="molecule type" value="Genomic_DNA"/>
</dbReference>
<dbReference type="EMBL" id="AY438118">
    <property type="protein sequence ID" value="AAR21483.1"/>
    <property type="molecule type" value="Genomic_DNA"/>
</dbReference>
<dbReference type="EMBL" id="AY438119">
    <property type="protein sequence ID" value="AAR21484.1"/>
    <property type="molecule type" value="Genomic_DNA"/>
</dbReference>
<dbReference type="EMBL" id="AY438120">
    <property type="protein sequence ID" value="AAR21485.1"/>
    <property type="molecule type" value="Genomic_DNA"/>
</dbReference>
<dbReference type="EMBL" id="AY438121">
    <property type="protein sequence ID" value="AAR21486.1"/>
    <property type="molecule type" value="Genomic_DNA"/>
</dbReference>
<dbReference type="EMBL" id="AY438122">
    <property type="protein sequence ID" value="AAR21487.1"/>
    <property type="molecule type" value="Genomic_DNA"/>
</dbReference>
<dbReference type="EMBL" id="AY438123">
    <property type="protein sequence ID" value="AAR21488.1"/>
    <property type="molecule type" value="Genomic_DNA"/>
</dbReference>
<dbReference type="EMBL" id="AY438124">
    <property type="protein sequence ID" value="AAR21489.1"/>
    <property type="molecule type" value="Genomic_DNA"/>
</dbReference>
<dbReference type="EMBL" id="AY438125">
    <property type="protein sequence ID" value="AAR21490.1"/>
    <property type="molecule type" value="Genomic_DNA"/>
</dbReference>
<dbReference type="EMBL" id="AY438126">
    <property type="protein sequence ID" value="AAR21491.1"/>
    <property type="molecule type" value="Genomic_DNA"/>
</dbReference>
<dbReference type="EMBL" id="AY438127">
    <property type="protein sequence ID" value="AAR21492.1"/>
    <property type="molecule type" value="Genomic_DNA"/>
</dbReference>
<dbReference type="EMBL" id="AY438128">
    <property type="protein sequence ID" value="AAR21493.1"/>
    <property type="molecule type" value="Genomic_DNA"/>
</dbReference>
<dbReference type="EMBL" id="AY438129">
    <property type="protein sequence ID" value="AAR21494.1"/>
    <property type="molecule type" value="Genomic_DNA"/>
</dbReference>
<dbReference type="EMBL" id="AY438130">
    <property type="protein sequence ID" value="AAR21495.1"/>
    <property type="molecule type" value="Genomic_DNA"/>
</dbReference>
<dbReference type="EMBL" id="AY438131">
    <property type="protein sequence ID" value="AAR21496.1"/>
    <property type="molecule type" value="Genomic_DNA"/>
</dbReference>
<dbReference type="EMBL" id="AY438132">
    <property type="protein sequence ID" value="AAR21497.1"/>
    <property type="molecule type" value="Genomic_DNA"/>
</dbReference>
<dbReference type="EMBL" id="AY438133">
    <property type="protein sequence ID" value="AAR21498.1"/>
    <property type="molecule type" value="Genomic_DNA"/>
</dbReference>
<dbReference type="EMBL" id="AY438134">
    <property type="protein sequence ID" value="AAR21499.1"/>
    <property type="molecule type" value="Genomic_DNA"/>
</dbReference>
<dbReference type="EMBL" id="AY438135">
    <property type="protein sequence ID" value="AAR21500.1"/>
    <property type="molecule type" value="Genomic_DNA"/>
</dbReference>
<dbReference type="EMBL" id="AY438136">
    <property type="protein sequence ID" value="AAR21501.1"/>
    <property type="molecule type" value="Genomic_DNA"/>
</dbReference>
<dbReference type="EMBL" id="AY438137">
    <property type="protein sequence ID" value="AAR21502.1"/>
    <property type="molecule type" value="Genomic_DNA"/>
</dbReference>
<dbReference type="EMBL" id="AY438138">
    <property type="protein sequence ID" value="AAR21503.1"/>
    <property type="molecule type" value="Genomic_DNA"/>
</dbReference>
<dbReference type="EMBL" id="AY438139">
    <property type="protein sequence ID" value="AAR21504.1"/>
    <property type="molecule type" value="Genomic_DNA"/>
</dbReference>
<dbReference type="EMBL" id="AY438140">
    <property type="protein sequence ID" value="AAR21505.1"/>
    <property type="molecule type" value="Genomic_DNA"/>
</dbReference>
<dbReference type="EMBL" id="AY438141">
    <property type="protein sequence ID" value="AAR21506.1"/>
    <property type="molecule type" value="Genomic_DNA"/>
</dbReference>
<dbReference type="EMBL" id="AY438147">
    <property type="protein sequence ID" value="AAR09172.1"/>
    <property type="molecule type" value="Genomic_DNA"/>
</dbReference>
<dbReference type="EMBL" id="AY438148">
    <property type="protein sequence ID" value="AAR09173.1"/>
    <property type="molecule type" value="Genomic_DNA"/>
</dbReference>
<dbReference type="EMBL" id="AY438149">
    <property type="protein sequence ID" value="AAR09174.1"/>
    <property type="molecule type" value="Genomic_DNA"/>
</dbReference>
<dbReference type="EMBL" id="AY438150">
    <property type="protein sequence ID" value="AAR09175.1"/>
    <property type="molecule type" value="Genomic_DNA"/>
</dbReference>
<dbReference type="EMBL" id="AY438151">
    <property type="protein sequence ID" value="AAR09176.1"/>
    <property type="molecule type" value="Genomic_DNA"/>
</dbReference>
<dbReference type="EMBL" id="AY438152">
    <property type="protein sequence ID" value="AAR09177.1"/>
    <property type="molecule type" value="Genomic_DNA"/>
</dbReference>
<dbReference type="EMBL" id="AY438153">
    <property type="protein sequence ID" value="AAR09178.1"/>
    <property type="molecule type" value="Genomic_DNA"/>
</dbReference>
<dbReference type="EMBL" id="AY438154">
    <property type="protein sequence ID" value="AAR09179.1"/>
    <property type="molecule type" value="Genomic_DNA"/>
</dbReference>
<dbReference type="EMBL" id="AY438155">
    <property type="protein sequence ID" value="AAR09180.1"/>
    <property type="molecule type" value="Genomic_DNA"/>
</dbReference>
<dbReference type="EMBL" id="AY438156">
    <property type="protein sequence ID" value="AAR09181.1"/>
    <property type="molecule type" value="Genomic_DNA"/>
</dbReference>
<dbReference type="EMBL" id="AY438157">
    <property type="protein sequence ID" value="AAR09182.1"/>
    <property type="molecule type" value="Genomic_DNA"/>
</dbReference>
<dbReference type="EMBL" id="AY438158">
    <property type="protein sequence ID" value="AAR09183.1"/>
    <property type="molecule type" value="Genomic_DNA"/>
</dbReference>
<dbReference type="EMBL" id="AY438159">
    <property type="protein sequence ID" value="AAR09184.1"/>
    <property type="molecule type" value="Genomic_DNA"/>
</dbReference>
<dbReference type="EMBL" id="AY438160">
    <property type="protein sequence ID" value="AAR09185.1"/>
    <property type="molecule type" value="Genomic_DNA"/>
</dbReference>
<dbReference type="EMBL" id="AY438161">
    <property type="protein sequence ID" value="AAR09186.1"/>
    <property type="molecule type" value="Genomic_DNA"/>
</dbReference>
<dbReference type="EMBL" id="AY438162">
    <property type="protein sequence ID" value="AAR09187.1"/>
    <property type="molecule type" value="Genomic_DNA"/>
</dbReference>
<dbReference type="EMBL" id="AY438163">
    <property type="protein sequence ID" value="AAR09188.1"/>
    <property type="molecule type" value="Genomic_DNA"/>
</dbReference>
<dbReference type="EMBL" id="AY438164">
    <property type="protein sequence ID" value="AAR09189.1"/>
    <property type="molecule type" value="Genomic_DNA"/>
</dbReference>
<dbReference type="EMBL" id="AY438165">
    <property type="protein sequence ID" value="AAR09190.1"/>
    <property type="molecule type" value="Genomic_DNA"/>
</dbReference>
<dbReference type="EMBL" id="AY438166">
    <property type="protein sequence ID" value="AAR09191.1"/>
    <property type="molecule type" value="Genomic_DNA"/>
</dbReference>
<dbReference type="EMBL" id="AY438167">
    <property type="protein sequence ID" value="AAR09192.1"/>
    <property type="molecule type" value="Genomic_DNA"/>
</dbReference>
<dbReference type="EMBL" id="AY438168">
    <property type="protein sequence ID" value="AAR09193.1"/>
    <property type="molecule type" value="Genomic_DNA"/>
</dbReference>
<dbReference type="EMBL" id="AY438169">
    <property type="protein sequence ID" value="AAR09194.1"/>
    <property type="molecule type" value="Genomic_DNA"/>
</dbReference>
<dbReference type="EMBL" id="AY438170">
    <property type="protein sequence ID" value="AAR09195.1"/>
    <property type="molecule type" value="Genomic_DNA"/>
</dbReference>
<dbReference type="EMBL" id="AY438171">
    <property type="protein sequence ID" value="AAR09196.1"/>
    <property type="molecule type" value="Genomic_DNA"/>
</dbReference>
<dbReference type="EMBL" id="AY438172">
    <property type="protein sequence ID" value="AAR09197.1"/>
    <property type="molecule type" value="Genomic_DNA"/>
</dbReference>
<dbReference type="EMBL" id="AY438173">
    <property type="protein sequence ID" value="AAR09198.1"/>
    <property type="molecule type" value="Genomic_DNA"/>
</dbReference>
<dbReference type="EMBL" id="AY438174">
    <property type="protein sequence ID" value="AAR09199.1"/>
    <property type="molecule type" value="Genomic_DNA"/>
</dbReference>
<dbReference type="EMBL" id="AY438175">
    <property type="protein sequence ID" value="AAR09200.1"/>
    <property type="molecule type" value="Genomic_DNA"/>
</dbReference>
<dbReference type="EMBL" id="AY438176">
    <property type="protein sequence ID" value="AAR09201.1"/>
    <property type="molecule type" value="Genomic_DNA"/>
</dbReference>
<dbReference type="EMBL" id="AY438177">
    <property type="protein sequence ID" value="AAR09202.1"/>
    <property type="molecule type" value="Genomic_DNA"/>
</dbReference>
<dbReference type="EMBL" id="AY438178">
    <property type="protein sequence ID" value="AAR09203.1"/>
    <property type="molecule type" value="Genomic_DNA"/>
</dbReference>
<dbReference type="EMBL" id="AY438179">
    <property type="protein sequence ID" value="AAR09204.1"/>
    <property type="molecule type" value="Genomic_DNA"/>
</dbReference>
<dbReference type="EMBL" id="AY438180">
    <property type="protein sequence ID" value="AAR09205.1"/>
    <property type="molecule type" value="Genomic_DNA"/>
</dbReference>
<dbReference type="EMBL" id="AY438181">
    <property type="protein sequence ID" value="AAR09206.1"/>
    <property type="molecule type" value="Genomic_DNA"/>
</dbReference>
<dbReference type="EMBL" id="AY438182">
    <property type="protein sequence ID" value="AAR09207.1"/>
    <property type="molecule type" value="Genomic_DNA"/>
</dbReference>
<dbReference type="EMBL" id="AY438183">
    <property type="protein sequence ID" value="AAR09208.1"/>
    <property type="molecule type" value="Genomic_DNA"/>
</dbReference>
<dbReference type="EMBL" id="AY438184">
    <property type="protein sequence ID" value="AAR09209.1"/>
    <property type="molecule type" value="Genomic_DNA"/>
</dbReference>
<dbReference type="EMBL" id="AY438185">
    <property type="protein sequence ID" value="AAR09210.1"/>
    <property type="molecule type" value="Genomic_DNA"/>
</dbReference>
<dbReference type="EMBL" id="AY438186">
    <property type="protein sequence ID" value="AAR09211.1"/>
    <property type="molecule type" value="Genomic_DNA"/>
</dbReference>
<dbReference type="EMBL" id="AY438187">
    <property type="protein sequence ID" value="AAR09212.1"/>
    <property type="molecule type" value="Genomic_DNA"/>
</dbReference>
<dbReference type="EMBL" id="AY438188">
    <property type="protein sequence ID" value="AAR09213.1"/>
    <property type="molecule type" value="Genomic_DNA"/>
</dbReference>
<dbReference type="EMBL" id="AY438189">
    <property type="protein sequence ID" value="AAR09214.1"/>
    <property type="molecule type" value="Genomic_DNA"/>
</dbReference>
<dbReference type="EMBL" id="AY438190">
    <property type="protein sequence ID" value="AAR09215.1"/>
    <property type="molecule type" value="Genomic_DNA"/>
</dbReference>
<dbReference type="EMBL" id="AY438191">
    <property type="protein sequence ID" value="AAR09216.1"/>
    <property type="molecule type" value="Genomic_DNA"/>
</dbReference>
<dbReference type="EMBL" id="AY438192">
    <property type="protein sequence ID" value="AAR09217.1"/>
    <property type="molecule type" value="Genomic_DNA"/>
</dbReference>
<dbReference type="EMBL" id="AY438193">
    <property type="protein sequence ID" value="AAR09218.1"/>
    <property type="molecule type" value="Genomic_DNA"/>
</dbReference>
<dbReference type="EMBL" id="AY438194">
    <property type="protein sequence ID" value="AAR09219.1"/>
    <property type="molecule type" value="Genomic_DNA"/>
</dbReference>
<dbReference type="EMBL" id="AY438195">
    <property type="protein sequence ID" value="AAR09220.1"/>
    <property type="molecule type" value="Genomic_DNA"/>
</dbReference>
<dbReference type="EMBL" id="AY438196">
    <property type="protein sequence ID" value="AAR09221.1"/>
    <property type="molecule type" value="Genomic_DNA"/>
</dbReference>
<dbReference type="EMBL" id="AY438197">
    <property type="protein sequence ID" value="AAR09222.1"/>
    <property type="molecule type" value="Genomic_DNA"/>
</dbReference>
<dbReference type="EMBL" id="AY438198">
    <property type="protein sequence ID" value="AAR09223.1"/>
    <property type="molecule type" value="Genomic_DNA"/>
</dbReference>
<dbReference type="EMBL" id="AY438199">
    <property type="protein sequence ID" value="AAR09224.1"/>
    <property type="molecule type" value="Genomic_DNA"/>
</dbReference>
<dbReference type="EMBL" id="AY438200">
    <property type="protein sequence ID" value="AAR09225.1"/>
    <property type="molecule type" value="Genomic_DNA"/>
</dbReference>
<dbReference type="EMBL" id="AY438201">
    <property type="protein sequence ID" value="AAR09226.1"/>
    <property type="molecule type" value="Genomic_DNA"/>
</dbReference>
<dbReference type="EMBL" id="AY438202">
    <property type="protein sequence ID" value="AAR09227.1"/>
    <property type="molecule type" value="Genomic_DNA"/>
</dbReference>
<dbReference type="EMBL" id="BK004004">
    <property type="protein sequence ID" value="DAA02303.1"/>
    <property type="molecule type" value="Genomic_DNA"/>
</dbReference>
<dbReference type="EMBL" id="AE014297">
    <property type="protein sequence ID" value="AAF55657.1"/>
    <property type="molecule type" value="Genomic_DNA"/>
</dbReference>
<dbReference type="EMBL" id="BT003267">
    <property type="protein sequence ID" value="AAO25024.1"/>
    <property type="molecule type" value="mRNA"/>
</dbReference>
<dbReference type="EMBL" id="AY061269">
    <property type="protein sequence ID" value="AAL28817.1"/>
    <property type="status" value="ALT_INIT"/>
    <property type="molecule type" value="mRNA"/>
</dbReference>
<dbReference type="EMBL" id="X05140">
    <property type="protein sequence ID" value="CAA28786.1"/>
    <property type="molecule type" value="mRNA"/>
</dbReference>
<dbReference type="PIR" id="A31246">
    <property type="entry name" value="A31246"/>
</dbReference>
<dbReference type="PIR" id="A43564">
    <property type="entry name" value="A43564"/>
</dbReference>
<dbReference type="PIR" id="S00670">
    <property type="entry name" value="S00670"/>
</dbReference>
<dbReference type="PIR" id="S19087">
    <property type="entry name" value="S19087"/>
</dbReference>
<dbReference type="RefSeq" id="NP_001247193.1">
    <property type="nucleotide sequence ID" value="NM_001260264.2"/>
</dbReference>
<dbReference type="RefSeq" id="NP_477264.1">
    <property type="nucleotide sequence ID" value="NM_057916.4"/>
</dbReference>
<dbReference type="RefSeq" id="NP_732412.1">
    <property type="nucleotide sequence ID" value="NM_169853.3"/>
</dbReference>
<dbReference type="PDB" id="4XIB">
    <property type="method" value="X-ray"/>
    <property type="resolution" value="2.15 A"/>
    <property type="chains" value="C=680-690"/>
</dbReference>
<dbReference type="PDB" id="7ALK">
    <property type="method" value="X-ray"/>
    <property type="resolution" value="3.00 A"/>
    <property type="chains" value="A=23-258"/>
</dbReference>
<dbReference type="PDBsum" id="4XIB"/>
<dbReference type="PDBsum" id="7ALK"/>
<dbReference type="SMR" id="P10041"/>
<dbReference type="BioGRID" id="67310">
    <property type="interactions" value="135"/>
</dbReference>
<dbReference type="DIP" id="DIP-22726N"/>
<dbReference type="FunCoup" id="P10041">
    <property type="interactions" value="32"/>
</dbReference>
<dbReference type="IntAct" id="P10041">
    <property type="interactions" value="4"/>
</dbReference>
<dbReference type="STRING" id="7227.FBpp0083153"/>
<dbReference type="GlyCosmos" id="P10041">
    <property type="glycosylation" value="3 sites, No reported glycans"/>
</dbReference>
<dbReference type="GlyGen" id="P10041">
    <property type="glycosylation" value="3 sites"/>
</dbReference>
<dbReference type="iPTMnet" id="P10041"/>
<dbReference type="PaxDb" id="7227-FBpp0083153"/>
<dbReference type="EnsemblMetazoa" id="FBtr0083739">
    <property type="protein sequence ID" value="FBpp0083153"/>
    <property type="gene ID" value="FBgn0000463"/>
</dbReference>
<dbReference type="EnsemblMetazoa" id="FBtr0083740">
    <property type="protein sequence ID" value="FBpp0083154"/>
    <property type="gene ID" value="FBgn0000463"/>
</dbReference>
<dbReference type="EnsemblMetazoa" id="FBtr0304658">
    <property type="protein sequence ID" value="FBpp0293200"/>
    <property type="gene ID" value="FBgn0000463"/>
</dbReference>
<dbReference type="GeneID" id="42313"/>
<dbReference type="KEGG" id="dme:Dmel_CG3619"/>
<dbReference type="AGR" id="FB:FBgn0000463"/>
<dbReference type="CTD" id="42313"/>
<dbReference type="FlyBase" id="FBgn0000463">
    <property type="gene designation" value="Delta"/>
</dbReference>
<dbReference type="VEuPathDB" id="VectorBase:FBgn0000463"/>
<dbReference type="eggNOG" id="KOG1217">
    <property type="taxonomic scope" value="Eukaryota"/>
</dbReference>
<dbReference type="GeneTree" id="ENSGT00940000170295"/>
<dbReference type="HOGENOM" id="CLU_012574_0_1_1"/>
<dbReference type="InParanoid" id="P10041"/>
<dbReference type="OMA" id="HYTCSET"/>
<dbReference type="OrthoDB" id="283575at2759"/>
<dbReference type="PhylomeDB" id="P10041"/>
<dbReference type="Reactome" id="R-DME-2979096">
    <property type="pathway name" value="NOTCH2 Activation and Transmission of Signal to the Nucleus"/>
</dbReference>
<dbReference type="SignaLink" id="P10041"/>
<dbReference type="BioGRID-ORCS" id="42313">
    <property type="hits" value="0 hits in 1 CRISPR screen"/>
</dbReference>
<dbReference type="ChiTaRS" id="Dl">
    <property type="organism name" value="fly"/>
</dbReference>
<dbReference type="EvolutionaryTrace" id="P10041"/>
<dbReference type="GenomeRNAi" id="42313"/>
<dbReference type="PRO" id="PR:P10041"/>
<dbReference type="Proteomes" id="UP000000803">
    <property type="component" value="Chromosome 3R"/>
</dbReference>
<dbReference type="Bgee" id="FBgn0000463">
    <property type="expression patterns" value="Expressed in intestinal stem cell (Drosophila) in digestive tract and 238 other cell types or tissues"/>
</dbReference>
<dbReference type="ExpressionAtlas" id="P10041">
    <property type="expression patterns" value="baseline and differential"/>
</dbReference>
<dbReference type="GO" id="GO:0045179">
    <property type="term" value="C:apical cortex"/>
    <property type="evidence" value="ECO:0000314"/>
    <property type="project" value="FlyBase"/>
</dbReference>
<dbReference type="GO" id="GO:0009986">
    <property type="term" value="C:cell surface"/>
    <property type="evidence" value="ECO:0000314"/>
    <property type="project" value="FlyBase"/>
</dbReference>
<dbReference type="GO" id="GO:0031410">
    <property type="term" value="C:cytoplasmic vesicle"/>
    <property type="evidence" value="ECO:0000314"/>
    <property type="project" value="FlyBase"/>
</dbReference>
<dbReference type="GO" id="GO:0005769">
    <property type="term" value="C:early endosome"/>
    <property type="evidence" value="ECO:0000314"/>
    <property type="project" value="FlyBase"/>
</dbReference>
<dbReference type="GO" id="GO:0030139">
    <property type="term" value="C:endocytic vesicle"/>
    <property type="evidence" value="ECO:0000314"/>
    <property type="project" value="FlyBase"/>
</dbReference>
<dbReference type="GO" id="GO:0005768">
    <property type="term" value="C:endosome"/>
    <property type="evidence" value="ECO:0000314"/>
    <property type="project" value="FlyBase"/>
</dbReference>
<dbReference type="GO" id="GO:0016020">
    <property type="term" value="C:membrane"/>
    <property type="evidence" value="ECO:0000314"/>
    <property type="project" value="FlyBase"/>
</dbReference>
<dbReference type="GO" id="GO:0005886">
    <property type="term" value="C:plasma membrane"/>
    <property type="evidence" value="ECO:0000314"/>
    <property type="project" value="FlyBase"/>
</dbReference>
<dbReference type="GO" id="GO:0005509">
    <property type="term" value="F:calcium ion binding"/>
    <property type="evidence" value="ECO:0007669"/>
    <property type="project" value="InterPro"/>
</dbReference>
<dbReference type="GO" id="GO:0043208">
    <property type="term" value="F:glycosphingolipid binding"/>
    <property type="evidence" value="ECO:0000314"/>
    <property type="project" value="FlyBase"/>
</dbReference>
<dbReference type="GO" id="GO:0005112">
    <property type="term" value="F:Notch binding"/>
    <property type="evidence" value="ECO:0000314"/>
    <property type="project" value="FlyBase"/>
</dbReference>
<dbReference type="GO" id="GO:0048018">
    <property type="term" value="F:receptor ligand activity"/>
    <property type="evidence" value="ECO:0000314"/>
    <property type="project" value="FlyBase"/>
</dbReference>
<dbReference type="GO" id="GO:0007015">
    <property type="term" value="P:actin filament organization"/>
    <property type="evidence" value="ECO:0000315"/>
    <property type="project" value="FlyBase"/>
</dbReference>
<dbReference type="GO" id="GO:0048800">
    <property type="term" value="P:antennal morphogenesis"/>
    <property type="evidence" value="ECO:0000315"/>
    <property type="project" value="FlyBase"/>
</dbReference>
<dbReference type="GO" id="GO:0007475">
    <property type="term" value="P:apposition of dorsal and ventral imaginal disc-derived wing surfaces"/>
    <property type="evidence" value="ECO:0000315"/>
    <property type="project" value="FlyBase"/>
</dbReference>
<dbReference type="GO" id="GO:0008356">
    <property type="term" value="P:asymmetric cell division"/>
    <property type="evidence" value="ECO:0000304"/>
    <property type="project" value="FlyBase"/>
</dbReference>
<dbReference type="GO" id="GO:0007298">
    <property type="term" value="P:border follicle cell migration"/>
    <property type="evidence" value="ECO:0000315"/>
    <property type="project" value="FlyBase"/>
</dbReference>
<dbReference type="GO" id="GO:0001708">
    <property type="term" value="P:cell fate specification"/>
    <property type="evidence" value="ECO:0000304"/>
    <property type="project" value="FlyBase"/>
</dbReference>
<dbReference type="GO" id="GO:0008407">
    <property type="term" value="P:chaeta morphogenesis"/>
    <property type="evidence" value="ECO:0000315"/>
    <property type="project" value="FlyBase"/>
</dbReference>
<dbReference type="GO" id="GO:0042051">
    <property type="term" value="P:compound eye photoreceptor development"/>
    <property type="evidence" value="ECO:0000315"/>
    <property type="project" value="FlyBase"/>
</dbReference>
<dbReference type="GO" id="GO:0046667">
    <property type="term" value="P:compound eye retinal cell programmed cell death"/>
    <property type="evidence" value="ECO:0000304"/>
    <property type="project" value="FlyBase"/>
</dbReference>
<dbReference type="GO" id="GO:0030707">
    <property type="term" value="P:follicle cell of egg chamber development"/>
    <property type="evidence" value="ECO:0000315"/>
    <property type="project" value="FlyBase"/>
</dbReference>
<dbReference type="GO" id="GO:0030713">
    <property type="term" value="P:follicle cell of egg chamber stalk formation"/>
    <property type="evidence" value="ECO:0000315"/>
    <property type="project" value="FlyBase"/>
</dbReference>
<dbReference type="GO" id="GO:0030718">
    <property type="term" value="P:germ-line stem cell population maintenance"/>
    <property type="evidence" value="ECO:0000315"/>
    <property type="project" value="FlyBase"/>
</dbReference>
<dbReference type="GO" id="GO:0008347">
    <property type="term" value="P:glial cell migration"/>
    <property type="evidence" value="ECO:0000315"/>
    <property type="project" value="FlyBase"/>
</dbReference>
<dbReference type="GO" id="GO:0007480">
    <property type="term" value="P:imaginal disc-derived leg morphogenesis"/>
    <property type="evidence" value="ECO:0000315"/>
    <property type="project" value="FlyBase"/>
</dbReference>
<dbReference type="GO" id="GO:0036011">
    <property type="term" value="P:imaginal disc-derived leg segmentation"/>
    <property type="evidence" value="ECO:0000315"/>
    <property type="project" value="FlyBase"/>
</dbReference>
<dbReference type="GO" id="GO:0008587">
    <property type="term" value="P:imaginal disc-derived wing margin morphogenesis"/>
    <property type="evidence" value="ECO:0000315"/>
    <property type="project" value="FlyBase"/>
</dbReference>
<dbReference type="GO" id="GO:0007476">
    <property type="term" value="P:imaginal disc-derived wing morphogenesis"/>
    <property type="evidence" value="ECO:0000315"/>
    <property type="project" value="FlyBase"/>
</dbReference>
<dbReference type="GO" id="GO:0046331">
    <property type="term" value="P:lateral inhibition"/>
    <property type="evidence" value="ECO:0000315"/>
    <property type="project" value="FlyBase"/>
</dbReference>
<dbReference type="GO" id="GO:0007498">
    <property type="term" value="P:mesoderm development"/>
    <property type="evidence" value="ECO:0000315"/>
    <property type="project" value="FlyBase"/>
</dbReference>
<dbReference type="GO" id="GO:0045746">
    <property type="term" value="P:negative regulation of Notch signaling pathway"/>
    <property type="evidence" value="ECO:0000318"/>
    <property type="project" value="GO_Central"/>
</dbReference>
<dbReference type="GO" id="GO:0007400">
    <property type="term" value="P:neuroblast fate determination"/>
    <property type="evidence" value="ECO:0000315"/>
    <property type="project" value="FlyBase"/>
</dbReference>
<dbReference type="GO" id="GO:0048665">
    <property type="term" value="P:neuron fate specification"/>
    <property type="evidence" value="ECO:0000315"/>
    <property type="project" value="FlyBase"/>
</dbReference>
<dbReference type="GO" id="GO:0007219">
    <property type="term" value="P:Notch signaling pathway"/>
    <property type="evidence" value="ECO:0000314"/>
    <property type="project" value="FlyBase"/>
</dbReference>
<dbReference type="GO" id="GO:0030720">
    <property type="term" value="P:oocyte localization involved in germarium-derived egg chamber formation"/>
    <property type="evidence" value="ECO:0000315"/>
    <property type="project" value="FlyBase"/>
</dbReference>
<dbReference type="GO" id="GO:0048477">
    <property type="term" value="P:oogenesis"/>
    <property type="evidence" value="ECO:0000315"/>
    <property type="project" value="FlyBase"/>
</dbReference>
<dbReference type="GO" id="GO:0007422">
    <property type="term" value="P:peripheral nervous system development"/>
    <property type="evidence" value="ECO:0000315"/>
    <property type="project" value="FlyBase"/>
</dbReference>
<dbReference type="GO" id="GO:0008284">
    <property type="term" value="P:positive regulation of cell population proliferation"/>
    <property type="evidence" value="ECO:0000315"/>
    <property type="project" value="FlyBase"/>
</dbReference>
<dbReference type="GO" id="GO:0045931">
    <property type="term" value="P:positive regulation of mitotic cell cycle"/>
    <property type="evidence" value="ECO:0000315"/>
    <property type="project" value="FlyBase"/>
</dbReference>
<dbReference type="GO" id="GO:0048056">
    <property type="term" value="P:R3/R4 cell differentiation"/>
    <property type="evidence" value="ECO:0000315"/>
    <property type="project" value="FlyBase"/>
</dbReference>
<dbReference type="GO" id="GO:0045466">
    <property type="term" value="P:R7 cell differentiation"/>
    <property type="evidence" value="ECO:0000315"/>
    <property type="project" value="FlyBase"/>
</dbReference>
<dbReference type="GO" id="GO:0090175">
    <property type="term" value="P:regulation of establishment of planar polarity"/>
    <property type="evidence" value="ECO:0000316"/>
    <property type="project" value="FlyBase"/>
</dbReference>
<dbReference type="GO" id="GO:0016330">
    <property type="term" value="P:second mitotic wave involved in compound eye morphogenesis"/>
    <property type="evidence" value="ECO:0000315"/>
    <property type="project" value="FlyBase"/>
</dbReference>
<dbReference type="GO" id="GO:0007423">
    <property type="term" value="P:sensory organ development"/>
    <property type="evidence" value="ECO:0000315"/>
    <property type="project" value="FlyBase"/>
</dbReference>
<dbReference type="GO" id="GO:0048863">
    <property type="term" value="P:stem cell differentiation"/>
    <property type="evidence" value="ECO:0000315"/>
    <property type="project" value="FlyBase"/>
</dbReference>
<dbReference type="GO" id="GO:0048100">
    <property type="term" value="P:wing disc anterior/posterior pattern formation"/>
    <property type="evidence" value="ECO:0000315"/>
    <property type="project" value="FlyBase"/>
</dbReference>
<dbReference type="GO" id="GO:0048190">
    <property type="term" value="P:wing disc dorsal/ventral pattern formation"/>
    <property type="evidence" value="ECO:0000315"/>
    <property type="project" value="FlyBase"/>
</dbReference>
<dbReference type="CDD" id="cd00054">
    <property type="entry name" value="EGF_CA"/>
    <property type="match status" value="6"/>
</dbReference>
<dbReference type="FunFam" id="2.10.25.10:FF:000018">
    <property type="entry name" value="Delta-like 1"/>
    <property type="match status" value="1"/>
</dbReference>
<dbReference type="FunFam" id="2.10.25.10:FF:000064">
    <property type="entry name" value="Delta-like protein"/>
    <property type="match status" value="1"/>
</dbReference>
<dbReference type="FunFam" id="2.10.25.10:FF:000230">
    <property type="entry name" value="Delta-like protein"/>
    <property type="match status" value="2"/>
</dbReference>
<dbReference type="FunFam" id="2.10.25.10:FF:000642">
    <property type="entry name" value="Delta-like protein"/>
    <property type="match status" value="1"/>
</dbReference>
<dbReference type="FunFam" id="2.10.25.140:FF:000001">
    <property type="entry name" value="Delta-like protein"/>
    <property type="match status" value="1"/>
</dbReference>
<dbReference type="FunFam" id="2.60.40.3510:FF:000008">
    <property type="entry name" value="Delta-like protein"/>
    <property type="match status" value="1"/>
</dbReference>
<dbReference type="FunFam" id="2.10.25.10:FF:000434">
    <property type="entry name" value="Predicted protein"/>
    <property type="match status" value="1"/>
</dbReference>
<dbReference type="Gene3D" id="2.10.25.140">
    <property type="match status" value="1"/>
</dbReference>
<dbReference type="Gene3D" id="2.60.40.3510">
    <property type="match status" value="1"/>
</dbReference>
<dbReference type="Gene3D" id="2.10.25.10">
    <property type="entry name" value="Laminin"/>
    <property type="match status" value="8"/>
</dbReference>
<dbReference type="InterPro" id="IPR001774">
    <property type="entry name" value="DSL"/>
</dbReference>
<dbReference type="InterPro" id="IPR001881">
    <property type="entry name" value="EGF-like_Ca-bd_dom"/>
</dbReference>
<dbReference type="InterPro" id="IPR013032">
    <property type="entry name" value="EGF-like_CS"/>
</dbReference>
<dbReference type="InterPro" id="IPR000742">
    <property type="entry name" value="EGF-like_dom"/>
</dbReference>
<dbReference type="InterPro" id="IPR000152">
    <property type="entry name" value="EGF-type_Asp/Asn_hydroxyl_site"/>
</dbReference>
<dbReference type="InterPro" id="IPR018097">
    <property type="entry name" value="EGF_Ca-bd_CS"/>
</dbReference>
<dbReference type="InterPro" id="IPR009030">
    <property type="entry name" value="Growth_fac_rcpt_cys_sf"/>
</dbReference>
<dbReference type="InterPro" id="IPR051022">
    <property type="entry name" value="Notch_Cell-Fate_Det"/>
</dbReference>
<dbReference type="InterPro" id="IPR011651">
    <property type="entry name" value="Notch_ligand_N"/>
</dbReference>
<dbReference type="PANTHER" id="PTHR24049">
    <property type="entry name" value="CRUMBS FAMILY MEMBER"/>
    <property type="match status" value="1"/>
</dbReference>
<dbReference type="PANTHER" id="PTHR24049:SF22">
    <property type="entry name" value="DROSOPHILA CRUMBS HOMOLOG"/>
    <property type="match status" value="1"/>
</dbReference>
<dbReference type="Pfam" id="PF01414">
    <property type="entry name" value="DSL"/>
    <property type="match status" value="1"/>
</dbReference>
<dbReference type="Pfam" id="PF00008">
    <property type="entry name" value="EGF"/>
    <property type="match status" value="6"/>
</dbReference>
<dbReference type="Pfam" id="PF21700">
    <property type="entry name" value="EGF_DL_JAG"/>
    <property type="match status" value="2"/>
</dbReference>
<dbReference type="Pfam" id="PF12661">
    <property type="entry name" value="hEGF"/>
    <property type="match status" value="1"/>
</dbReference>
<dbReference type="Pfam" id="PF07657">
    <property type="entry name" value="MNNL"/>
    <property type="match status" value="1"/>
</dbReference>
<dbReference type="SMART" id="SM00051">
    <property type="entry name" value="DSL"/>
    <property type="match status" value="1"/>
</dbReference>
<dbReference type="SMART" id="SM00181">
    <property type="entry name" value="EGF"/>
    <property type="match status" value="9"/>
</dbReference>
<dbReference type="SMART" id="SM00179">
    <property type="entry name" value="EGF_CA"/>
    <property type="match status" value="7"/>
</dbReference>
<dbReference type="SUPFAM" id="SSF57196">
    <property type="entry name" value="EGF/Laminin"/>
    <property type="match status" value="3"/>
</dbReference>
<dbReference type="SUPFAM" id="SSF57184">
    <property type="entry name" value="Growth factor receptor domain"/>
    <property type="match status" value="1"/>
</dbReference>
<dbReference type="PROSITE" id="PS00010">
    <property type="entry name" value="ASX_HYDROXYL"/>
    <property type="match status" value="3"/>
</dbReference>
<dbReference type="PROSITE" id="PS51051">
    <property type="entry name" value="DSL"/>
    <property type="match status" value="1"/>
</dbReference>
<dbReference type="PROSITE" id="PS00022">
    <property type="entry name" value="EGF_1"/>
    <property type="match status" value="9"/>
</dbReference>
<dbReference type="PROSITE" id="PS01186">
    <property type="entry name" value="EGF_2"/>
    <property type="match status" value="9"/>
</dbReference>
<dbReference type="PROSITE" id="PS50026">
    <property type="entry name" value="EGF_3"/>
    <property type="match status" value="7"/>
</dbReference>
<dbReference type="PROSITE" id="PS01187">
    <property type="entry name" value="EGF_CA"/>
    <property type="match status" value="2"/>
</dbReference>
<organism>
    <name type="scientific">Drosophila melanogaster</name>
    <name type="common">Fruit fly</name>
    <dbReference type="NCBI Taxonomy" id="7227"/>
    <lineage>
        <taxon>Eukaryota</taxon>
        <taxon>Metazoa</taxon>
        <taxon>Ecdysozoa</taxon>
        <taxon>Arthropoda</taxon>
        <taxon>Hexapoda</taxon>
        <taxon>Insecta</taxon>
        <taxon>Pterygota</taxon>
        <taxon>Neoptera</taxon>
        <taxon>Endopterygota</taxon>
        <taxon>Diptera</taxon>
        <taxon>Brachycera</taxon>
        <taxon>Muscomorpha</taxon>
        <taxon>Ephydroidea</taxon>
        <taxon>Drosophilidae</taxon>
        <taxon>Drosophila</taxon>
        <taxon>Sophophora</taxon>
    </lineage>
</organism>
<protein>
    <recommendedName>
        <fullName evidence="13">Neurogenic locus protein delta</fullName>
    </recommendedName>
</protein>
<evidence type="ECO:0000250" key="1"/>
<evidence type="ECO:0000250" key="2">
    <source>
        <dbReference type="UniProtKB" id="D3ZHH1"/>
    </source>
</evidence>
<evidence type="ECO:0000255" key="3"/>
<evidence type="ECO:0000255" key="4">
    <source>
        <dbReference type="PROSITE-ProRule" id="PRU00076"/>
    </source>
</evidence>
<evidence type="ECO:0000255" key="5">
    <source>
        <dbReference type="PROSITE-ProRule" id="PRU00377"/>
    </source>
</evidence>
<evidence type="ECO:0000256" key="6">
    <source>
        <dbReference type="SAM" id="MobiDB-lite"/>
    </source>
</evidence>
<evidence type="ECO:0000269" key="7">
    <source>
    </source>
</evidence>
<evidence type="ECO:0000269" key="8">
    <source>
    </source>
</evidence>
<evidence type="ECO:0000269" key="9">
    <source>
    </source>
</evidence>
<evidence type="ECO:0000269" key="10">
    <source>
    </source>
</evidence>
<evidence type="ECO:0000269" key="11">
    <source>
    </source>
</evidence>
<evidence type="ECO:0000269" key="12">
    <source>
    </source>
</evidence>
<evidence type="ECO:0000303" key="13">
    <source>
    </source>
</evidence>
<evidence type="ECO:0000305" key="14"/>
<evidence type="ECO:0000312" key="15">
    <source>
        <dbReference type="FlyBase" id="FBgn0000463"/>
    </source>
</evidence>
<evidence type="ECO:0007829" key="16">
    <source>
        <dbReference type="PDB" id="7ALK"/>
    </source>
</evidence>
<keyword id="KW-0002">3D-structure</keyword>
<keyword id="KW-0217">Developmental protein</keyword>
<keyword id="KW-0221">Differentiation</keyword>
<keyword id="KW-1015">Disulfide bond</keyword>
<keyword id="KW-0245">EGF-like domain</keyword>
<keyword id="KW-0325">Glycoprotein</keyword>
<keyword id="KW-0472">Membrane</keyword>
<keyword id="KW-0524">Neurogenesis</keyword>
<keyword id="KW-0914">Notch signaling pathway</keyword>
<keyword id="KW-0597">Phosphoprotein</keyword>
<keyword id="KW-1185">Reference proteome</keyword>
<keyword id="KW-0677">Repeat</keyword>
<keyword id="KW-0732">Signal</keyword>
<keyword id="KW-0812">Transmembrane</keyword>
<keyword id="KW-1133">Transmembrane helix</keyword>
<keyword id="KW-0832">Ubl conjugation</keyword>
<proteinExistence type="evidence at protein level"/>
<gene>
    <name evidence="13 15" type="primary">Delta</name>
    <name type="synonym">Dl</name>
    <name evidence="15" type="ORF">CG3619</name>
</gene>